<gene>
    <name type="primary">gag-pol</name>
</gene>
<keyword id="KW-0002">3D-structure</keyword>
<keyword id="KW-1073">Activation of host caspases by virus</keyword>
<keyword id="KW-0014">AIDS</keyword>
<keyword id="KW-0064">Aspartyl protease</keyword>
<keyword id="KW-0167">Capsid protein</keyword>
<keyword id="KW-0229">DNA integration</keyword>
<keyword id="KW-0233">DNA recombination</keyword>
<keyword id="KW-0238">DNA-binding</keyword>
<keyword id="KW-0239">DNA-directed DNA polymerase</keyword>
<keyword id="KW-0255">Endonuclease</keyword>
<keyword id="KW-1262">Eukaryotic host gene expression shutoff by virus</keyword>
<keyword id="KW-1193">Eukaryotic host translation shutoff by virus</keyword>
<keyword id="KW-1032">Host cell membrane</keyword>
<keyword id="KW-1035">Host cytoplasm</keyword>
<keyword id="KW-1039">Host endosome</keyword>
<keyword id="KW-1190">Host gene expression shutoff by virus</keyword>
<keyword id="KW-1043">Host membrane</keyword>
<keyword id="KW-1048">Host nucleus</keyword>
<keyword id="KW-0945">Host-virus interaction</keyword>
<keyword id="KW-0378">Hydrolase</keyword>
<keyword id="KW-0446">Lipid-binding</keyword>
<keyword id="KW-0449">Lipoprotein</keyword>
<keyword id="KW-0460">Magnesium</keyword>
<keyword id="KW-0472">Membrane</keyword>
<keyword id="KW-0479">Metal-binding</keyword>
<keyword id="KW-1119">Modulation of host cell apoptosis by virus</keyword>
<keyword id="KW-0511">Multifunctional enzyme</keyword>
<keyword id="KW-0519">Myristate</keyword>
<keyword id="KW-0540">Nuclease</keyword>
<keyword id="KW-0548">Nucleotidyltransferase</keyword>
<keyword id="KW-0597">Phosphoprotein</keyword>
<keyword id="KW-0645">Protease</keyword>
<keyword id="KW-1185">Reference proteome</keyword>
<keyword id="KW-0677">Repeat</keyword>
<keyword id="KW-0688">Ribosomal frameshifting</keyword>
<keyword id="KW-0694">RNA-binding</keyword>
<keyword id="KW-0695">RNA-directed DNA polymerase</keyword>
<keyword id="KW-0808">Transferase</keyword>
<keyword id="KW-1179">Viral genome integration</keyword>
<keyword id="KW-0543">Viral nucleoprotein</keyword>
<keyword id="KW-1163">Viral penetration into host nucleus</keyword>
<keyword id="KW-1188">Viral release from host cell</keyword>
<keyword id="KW-0946">Virion</keyword>
<keyword id="KW-0917">Virion maturation</keyword>
<keyword id="KW-1160">Virus entry into host cell</keyword>
<keyword id="KW-0862">Zinc</keyword>
<keyword id="KW-0863">Zinc-finger</keyword>
<reference key="1">
    <citation type="journal article" date="1985" name="Cell">
        <title>Nucleotide sequence of the AIDS virus, LAV.</title>
        <authorList>
            <person name="Wain-Hobson S."/>
            <person name="Sonigo P."/>
            <person name="Danos O."/>
            <person name="Cole S."/>
            <person name="Alizon M."/>
        </authorList>
    </citation>
    <scope>NUCLEOTIDE SEQUENCE [GENOMIC RNA]</scope>
</reference>
<reference key="2">
    <citation type="journal article" date="1986" name="Cell">
        <title>Genetic variability of the AIDS virus: nucleotide sequence analysis of two isolates from African patients.</title>
        <authorList>
            <person name="Alizon M."/>
            <person name="Wain-Hobson S."/>
            <person name="Montagnier L."/>
            <person name="Sonigo P."/>
        </authorList>
    </citation>
    <scope>SEQUENCE REVISION TO 455-467</scope>
</reference>
<reference key="3">
    <citation type="journal article" date="1995" name="FEBS Lett.">
        <title>Cleavage of recombinant and cell derived human immunodeficiency virus 1 (HIV-1) Nef protein by HIV-1 protease.</title>
        <authorList>
            <person name="Gaedigk-Nitschko K."/>
            <person name="Schoen A."/>
            <person name="Wachinger G."/>
            <person name="Erfle V."/>
            <person name="Kohleisen B."/>
        </authorList>
    </citation>
    <scope>CLEAVAGE OF NEF BY VIRAL PROTEASE</scope>
</reference>
<reference key="4">
    <citation type="journal article" date="2002" name="J. Virol.">
        <title>Intravirion processing of the human immunodeficiency virus type 1 Vif protein by the viral protease may be correlated with Vif function.</title>
        <authorList>
            <person name="Khan M.A."/>
            <person name="Akari H."/>
            <person name="Kao S."/>
            <person name="Aberham C."/>
            <person name="Davis D."/>
            <person name="Buckler-White A."/>
            <person name="Strebel K."/>
        </authorList>
    </citation>
    <scope>CLEAVAGE OF VIF BY VIRAL PROTEASE</scope>
</reference>
<reference key="5">
    <citation type="journal article" date="1996" name="Curr. Top. Microbiol. Immunol.">
        <title>Proteolytic processing and particle maturation.</title>
        <authorList>
            <person name="Vogt V.M."/>
        </authorList>
    </citation>
    <scope>REVIEW</scope>
</reference>
<reference key="6">
    <citation type="journal article" date="1999" name="J. Mol. Biol.">
        <title>Structural biology of HIV.</title>
        <authorList>
            <person name="Turner B.G."/>
            <person name="Summers M.F."/>
        </authorList>
    </citation>
    <scope>REVIEW</scope>
</reference>
<reference key="7">
    <citation type="journal article" date="2001" name="Annu. Rev. Genet.">
        <title>Mechanisms of retroviral recombination.</title>
        <authorList>
            <person name="Negroni M."/>
            <person name="Buc H."/>
        </authorList>
    </citation>
    <scope>REVIEW</scope>
</reference>
<reference key="8">
    <citation type="journal article" date="2002" name="Genome Biol.">
        <title>Retroviral proteases.</title>
        <authorList>
            <person name="Dunn B.M."/>
            <person name="Goodenow M.M."/>
            <person name="Gustchina A."/>
            <person name="Wlodawer A."/>
        </authorList>
    </citation>
    <scope>REVIEW</scope>
</reference>
<reference key="9">
    <citation type="journal article" date="2003" name="Biochim. Biophys. Acta">
        <title>Role of HIV-1 Gag domains in viral assembly.</title>
        <authorList>
            <person name="Scarlata S."/>
            <person name="Carter C."/>
        </authorList>
    </citation>
    <scope>REVIEW</scope>
</reference>
<reference key="10">
    <citation type="journal article" date="1991" name="Biochimie">
        <title>The three-dimensional structure of the aspartyl protease from the HIV-1 isolate BRU.</title>
        <authorList>
            <person name="Spinelli S."/>
            <person name="Liu Q.Z."/>
            <person name="Alzari P.M."/>
            <person name="Hirel P.H."/>
            <person name="Poljak R.J."/>
        </authorList>
    </citation>
    <scope>X-RAY CRYSTALLOGRAPHY (2.7 ANGSTROMS) OF 501-599</scope>
</reference>
<reference key="11">
    <citation type="journal article" date="1992" name="Nature">
        <title>Structure of HIV-1 reverse transcriptase/DNA complex at 7 A resolution showing active site locations.</title>
        <authorList>
            <person name="Arnold E."/>
            <person name="Jacobo-Molina A."/>
            <person name="Nanni R.G."/>
            <person name="Williams R.L."/>
            <person name="Lu X."/>
            <person name="Ding J."/>
            <person name="Clark A.D. Jr."/>
            <person name="Zhang A."/>
            <person name="Ferris A.L."/>
            <person name="Clark P."/>
            <person name="Hizi A."/>
            <person name="Hughes S.H."/>
        </authorList>
    </citation>
    <scope>X-RAY CRYSTALLOGRAPHY (2.8 ANGSTROMS) OF 600-1026</scope>
</reference>
<reference key="12">
    <citation type="journal article" date="1994" name="J. Biol. Chem.">
        <title>Crystal structure at 1.9-A resolution of human immunodeficiency virus (HIV) II protease complexed with L-735,524, an orally bioavailable inhibitor of the HIV proteases.</title>
        <authorList>
            <person name="Chen Z."/>
            <person name="Li Y."/>
            <person name="Chen E."/>
            <person name="Hall D.L."/>
            <person name="Darke P.L."/>
            <person name="Culberson C."/>
            <person name="Shafer J.A."/>
            <person name="Kuo L.C."/>
        </authorList>
    </citation>
    <scope>X-RAY CRYSTALLOGRAPHY (1.9 ANGSTROMS) OF 501-599 IN COMPLEX WITH THE INHIBITOR L-736,524</scope>
</reference>
<reference key="13">
    <citation type="journal article" date="1996" name="J. Med. Chem.">
        <title>Structure-based design of HIV protease inhibitors: sulfonamide-containing 5,6-dihydro-4-hydroxy-2-pyrones as non-peptidic inhibitors.</title>
        <authorList>
            <person name="Thaisrivongs S."/>
            <person name="Skulnick H.I."/>
            <person name="Turner S.R."/>
            <person name="Strohbach J.W."/>
            <person name="Tommasi R.A."/>
            <person name="Johnson P.D."/>
            <person name="Aristoff P.A."/>
            <person name="Judge T.M."/>
            <person name="Gammill R.B."/>
            <person name="Morris J.K."/>
            <person name="Romines K.R."/>
            <person name="Chrusciel R.A."/>
            <person name="Hinshaw R.R."/>
            <person name="Chong K.-T."/>
            <person name="Tarpley W.G."/>
            <person name="Poppe S.M."/>
            <person name="Slade D.E."/>
            <person name="Lynn J.C."/>
            <person name="Horng M.-M."/>
            <person name="Tomich P.K."/>
            <person name="Seest E.P."/>
            <person name="Dolak L.A."/>
            <person name="Howe W.J."/>
            <person name="Howard G.M."/>
            <person name="Schwende F.J."/>
            <person name="Toth L.N."/>
            <person name="Padbury G.E."/>
            <person name="Wilson G.J."/>
            <person name="Shiou L."/>
            <person name="Zipp G.L."/>
            <person name="Wilkinson K.F."/>
            <person name="Rush B.D."/>
            <person name="Ruwart M.J."/>
            <person name="Koeplinger K.A."/>
            <person name="Zhao Z."/>
            <person name="Cole S."/>
            <person name="Zaya R.M."/>
            <person name="Kakuk T.J."/>
            <person name="Janakiraman M.N."/>
            <person name="Watenpaugh K.D."/>
        </authorList>
    </citation>
    <scope>X-RAY CRYSTALLOGRAPHY (2.5 ANGSTROMS) OF 501-599</scope>
</reference>
<reference key="14">
    <citation type="journal article" date="1996" name="J. Mol. Biol.">
        <title>Inhibition and catalytic mechanism of HIV-1 aspartic protease.</title>
        <authorList>
            <person name="Silva A.M."/>
            <person name="Cachau R.E."/>
            <person name="Sham H.L."/>
            <person name="Erickson J.W."/>
        </authorList>
    </citation>
    <scope>X-RAY CRYSTALLOGRAPHY (2.5 ANGSTROMS) OF 501-599 IN COMPLEX WITH THE DIFLUOROKETONE CONTAINING INHIBITOR A79285</scope>
</reference>
<reference key="15">
    <citation type="journal article" date="1997" name="Eur. J. Biochem.">
        <title>Crystallographic analysis of human immunodeficiency virus 1 protease with an analog of the conserved CA-p2 substrate -- interactions with frequently occurring glutamic acid residue at P2' position of substrates.</title>
        <authorList>
            <person name="Weber I.T."/>
            <person name="Wu J."/>
            <person name="Adomat J.M."/>
            <person name="Harrison R.W."/>
            <person name="Kimmel A.R."/>
            <person name="Wondrak E.M."/>
            <person name="Louis J.M."/>
        </authorList>
    </citation>
    <scope>X-RAY CRYSTALLOGRAPHY (2.0 ANGSTROMS) OF 501-599</scope>
</reference>
<reference key="16">
    <citation type="journal article" date="1998" name="Biochemistry">
        <title>Structural basis for specificity of retroviral proteases.</title>
        <authorList>
            <person name="Wu J."/>
            <person name="Adomat J.M."/>
            <person name="Ridky T.W."/>
            <person name="Louis J.M."/>
            <person name="Leis J."/>
            <person name="Harrison R.W."/>
            <person name="Weber I.T."/>
        </authorList>
    </citation>
    <scope>X-RAY CRYSTALLOGRAPHY (2.0 ANGSTROMS) OF 501-599</scope>
</reference>
<reference key="17">
    <citation type="journal article" date="1999" name="J. Mol. Biol.">
        <title>X-ray structure and conformational dynamics of the HIV-1 protease in complex with the inhibitor SDZ283-910: agreement of time-resolved spectroscopy and molecular dynamics simulations.</title>
        <authorList>
            <person name="Ringhofer S."/>
            <person name="Kallen J."/>
            <person name="Dutzler R."/>
            <person name="Billich A."/>
            <person name="Visser A.J."/>
            <person name="Scholz D."/>
            <person name="Steinhauser O."/>
            <person name="Schreiber H."/>
            <person name="Auer M."/>
            <person name="Kungl A.J."/>
        </authorList>
    </citation>
    <scope>X-RAY CRYSTALLOGRAPHY (1.7 ANGSTROMS) OF 501-599 IN COMPLEX WITH INHIBITOR SDZ283-910</scope>
</reference>
<reference key="18">
    <citation type="journal article" date="2001" name="Acta Crystallogr. D">
        <title>A distinct binding mode of a hydroxyethylamine isostere inhibitor of HIV-1 protease.</title>
        <authorList>
            <person name="Dohnalek J."/>
            <person name="Hasek J."/>
            <person name="Duskova J."/>
            <person name="Petrokova H."/>
            <person name="Hradilek M."/>
            <person name="Soucek M."/>
            <person name="Konvalinka J."/>
            <person name="Brynda J."/>
            <person name="Sedlacek J."/>
            <person name="Fabry M."/>
        </authorList>
    </citation>
    <scope>X-RAY CRYSTALLOGRAPHY (3.1 ANGSTROMS) OF 501-599 IN COMPLEX WITH A PEPTIDOMIMETIC INHIBITOR</scope>
</reference>
<reference key="19">
    <citation type="journal article" date="2002" name="J. Med. Chem.">
        <title>Hydroxyethylamine isostere of an HIV-1 protease inhibitor prefers its amine to the hydroxy group in binding to catalytic aspartates. A synchrotron study of HIV-1 protease in complex with a peptidomimetic inhibitor.</title>
        <authorList>
            <person name="Dohnalek J."/>
            <person name="Hasek J."/>
            <person name="Duskova J."/>
            <person name="Petrokova H."/>
            <person name="Hradilek M."/>
            <person name="Soucek M."/>
            <person name="Konvalinka J."/>
            <person name="Brynda J."/>
            <person name="Sedlacek J."/>
            <person name="Fabry M."/>
        </authorList>
    </citation>
    <scope>X-RAY CRYSTALLOGRAPHY (1.83 ANGSTROMS) OF 501-599</scope>
</reference>
<reference key="20">
    <citation type="journal article" date="2003" name="J. Med. Chem.">
        <title>An ethylenamine inhibitor binds tightly to both wild type and mutant HIV-1 proteases. Structure and energy study.</title>
        <authorList>
            <person name="Skalova T."/>
            <person name="Hasek J."/>
            <person name="Dohnalek J."/>
            <person name="Petrokova H."/>
            <person name="Buchtelova E."/>
            <person name="Duskova J."/>
            <person name="Soucek M."/>
            <person name="Majer P."/>
            <person name="Uhlikova T."/>
            <person name="Konvalinka J."/>
        </authorList>
    </citation>
    <scope>X-RAY CRYSTALLOGRAPHY (2.2 ANGSTROMS) OF 501-599 IN COMPLEX WITH AN ETHYLENAMINE PEPTIDOMIMETIC INHIBITOR</scope>
</reference>
<reference key="21">
    <citation type="journal article" date="2004" name="Eur. J. Biochem.">
        <title>Role of hydroxyl group and R/S configuration of isostere in binding properties of HIV-1 protease inhibitors.</title>
        <authorList>
            <person name="Petrokova H."/>
            <person name="Duskova J."/>
            <person name="Dohnalek J."/>
            <person name="Skalova T."/>
            <person name="Vondrackova-Buchtelova E."/>
            <person name="Soucek M."/>
            <person name="Konvalinka J."/>
            <person name="Brynda J."/>
            <person name="Fabry M."/>
            <person name="Sedlacek J."/>
            <person name="Hasek J."/>
        </authorList>
    </citation>
    <scope>X-RAY CRYSTALLOGRAPHY (2.45 ANGSTROMS) OF 501-599 IN COMPLEX WITH AN ETHYLENEAMINE INHIBITOR</scope>
</reference>
<reference key="22">
    <citation type="journal article" date="2004" name="Proteins">
        <title>A structural and thermodynamic escape mechanism from a drug resistant mutation of the HIV-1 protease.</title>
        <authorList>
            <person name="Vega S."/>
            <person name="Kang L.W."/>
            <person name="Velazquez-Campoy A."/>
            <person name="Kiso Y."/>
            <person name="Amzel L.M."/>
            <person name="Freire E."/>
        </authorList>
    </citation>
    <scope>X-RAY CRYSTALLOGRAPHY (2.0 ANGSTROMS) OF 501-599 IN COMPLEX WITH THE INHIBITOR KNI-577</scope>
</reference>
<reference key="23">
    <citation type="journal article" date="2004" name="J. Med. Chem.">
        <title>A phenylnorstatine inhibitor binding to HIV-1 protease: geometry, protonation, and subsite-pocket interactions analyzed at atomic resolution.</title>
        <authorList>
            <person name="Brynda J."/>
            <person name="Rezacova P."/>
            <person name="Fabry M."/>
            <person name="Horejsi M."/>
            <person name="Stouracova R."/>
            <person name="Sedlacek J."/>
            <person name="Soucek M."/>
            <person name="Hradilek M."/>
            <person name="Lepsik M."/>
            <person name="Konvalinka J."/>
        </authorList>
    </citation>
    <scope>X-RAY CRYSTALLOGRAPHY (1.03 ANGSTROMS) OF 501-599 IN COMPLEX WITH A PEPTIDOMIMETIC INHIBITOR</scope>
</reference>
<reference key="24">
    <citation type="journal article" date="2004" name="J. Mol. Biol.">
        <title>High resolution crystal structures of HIV-1 protease with a potent non-peptide inhibitor (UIC-94017) active against multi-drug-resistant clinical strains.</title>
        <authorList>
            <person name="Tie Y."/>
            <person name="Boross P.I."/>
            <person name="Wang Y.-F."/>
            <person name="Gaddis L."/>
            <person name="Hussain A.K."/>
            <person name="Leshchenko S."/>
            <person name="Ghosh A.K."/>
            <person name="Louis J.M."/>
            <person name="Harrison R.W."/>
            <person name="Weber I.T."/>
        </authorList>
    </citation>
    <scope>X-RAY CRYSTALLOGRAPHY (1.1 ANGSTROMS) OF 501-599 IN COMPLEX WITH THE INHIBITOR UIC-94017</scope>
</reference>
<reference key="25">
    <citation type="journal article" date="2004" name="Eur. J. Biochem.">
        <title>Crystal structures of HIV protease V82A and L90M mutants reveal changes in the indinavir-binding site.</title>
        <authorList>
            <person name="Mahalingam B."/>
            <person name="Wang Y.-F."/>
            <person name="Boross P.I."/>
            <person name="Tozser J."/>
            <person name="Louis J.M."/>
            <person name="Harrison R.W."/>
            <person name="Weber I.T."/>
        </authorList>
    </citation>
    <scope>X-RAY CRYSTALLOGRAPHY (1.3 ANGSTROMS) OF 501-599</scope>
</reference>
<reference key="26">
    <citation type="journal article" date="2004" name="Biochemistry">
        <title>Comparing the accumulation of active- and nonactive-site mutations in the HIV-1 protease.</title>
        <authorList>
            <person name="Clemente J.C."/>
            <person name="Moose R.E."/>
            <person name="Hemrajani R."/>
            <person name="Whitford L.R."/>
            <person name="Govindasamy L."/>
            <person name="Reutzel R."/>
            <person name="McKenna R."/>
            <person name="Agbandje-McKenna M."/>
            <person name="Goodenow M.M."/>
            <person name="Dunn B.M."/>
        </authorList>
    </citation>
    <scope>X-RAY CRYSTALLOGRAPHY (1.9 ANGSTROMS) OF 501-599</scope>
</reference>
<reference key="27">
    <citation type="journal article" date="2004" name="Acta Crystallogr. D">
        <title>Inhibitor binding at the protein interface in crystals of a HIV-1 protease complex.</title>
        <authorList>
            <person name="Brynda J."/>
            <person name="Rezacova P."/>
            <person name="Fabry M."/>
            <person name="Horejsi M."/>
            <person name="Stouracova R."/>
            <person name="Soucek M."/>
            <person name="Hradilek M."/>
            <person name="Konvalinka J."/>
            <person name="Sedlacek J."/>
        </authorList>
    </citation>
    <scope>X-RAY CRYSTALLOGRAPHY (2.2 ANGSTROMS) OF 501-599 IN COMPLEX WITH A PEPTIDOMIMETIC INHIBITOR</scope>
</reference>
<reference key="28">
    <citation type="journal article" date="2017" name="Science">
        <title>Cryo-EM structures and atomic model of the HIV-1 strand transfer complex intasome.</title>
        <authorList>
            <person name="Passos D.O."/>
            <person name="Li M."/>
            <person name="Yang R."/>
            <person name="Rebensburg S.V."/>
            <person name="Ghirlando R."/>
            <person name="Jeon Y."/>
            <person name="Shkriabai N."/>
            <person name="Kvaratskhelia M."/>
            <person name="Craigie R."/>
            <person name="Lyumkis D."/>
        </authorList>
    </citation>
    <scope>STRUCTURE BY ELECTRON MICROSCOPY (3.90 ANGSTROMS) OF 1160-1447</scope>
    <scope>SUBUNIT (INTEGRASE)</scope>
</reference>
<sequence>MGARASVLSGGELDRWEKIRLRPGGKKKYKLKHIVWASRELERFAVNPGLLETSEGCRQILGQLQPSLQTGSEELRSLYNTVATLYCVHQRIEIKDTKEALDKIEEEQNKSKKKAQQAAADTGHSSQVSQNYPIVQNIQGQMVHQAISPRTLNAWVKVVEEKAFSPEVIPMFSALSEGATPQDLNTMLNTVGGHQAAMQMLKETINEEAAEWDRVHPVHAGPIAPGQMREPRGSDIAGTTSTLQEQIGWMTNNPPIPVGEIYKRWIILGLNKIVRMYSPTSILDIRQGPKEPFRDYVDRFYKTLRAEQASQEVKNWMTETLLVQNANPDCKTILKALGPAATLEEMMTACQGVGGPGHKARVLAEAMSQVTNSATIMMQRGNFRNQRKIVKCFNCGKEGHIARNCRAPRKKGCWKCGKEGHQMKDCTERQANFLREDLAFLQGKAREFSSEQTRANSPTISSEQTRANSPTRRELQVWGRDNNSLSEAGADRQGTVSFNFPQITLWQRPLVTIKIGGQLKEALLDTGADDTVLEEMSLPGRWKPKMIGGIGGFIKVRQYDQILIEICGHKAIGTVLVGPTPVNIIGRNLLTQIGCTLNFPISPIETVPVKLKPGMDGPKVKQWPLTEEKIKALVEICTEMEKEGKISKIGPENPYNTPVFAIKKKDSTKWRKLVDFRELNKRTQDFWEVQLGIPHPAGLKKKKSVTVLDVGDAYFSVPLDEDFRKYTAFTIPSINNETPGIRYQYNVLPQGWKGSPAIFQSSMTKILEPFRKQNPDIVIYQYMDDLYVGSDLEIGQHRTKIEELRQHLLRWGLTTPDKKHQKEPPFLWMGYELHPDKWTVQPIVLPEKDSWTVNDIQKLVGKLNWASQIYPGIKVRQLCKLLRGTKALTEVIPLTEEAELELAENREILKEPVHGVYYDPSKDLIAEIQKQGQGQWTYQIYQEPFKNLKTGKYARTRGAHTNDVKQLTEAVQKITTESIVIWGKTPKFKLPIQKETWETWWTEYWQATWIPEWEFVNTPPLVKLWYQLEKEPIVGAETFYVDGAASRETKLGKAGYVTNRGRQKVVTLTDTTNQKTELQAIHLALQDSGLEVNIVTDSQYALGIIQAQPDKSESELVNQIIEQLIKKEKVYLAWVPAHKGIGGNEQVDKLVSAGIRKVLFLDGIDKAQDEHEKYHSNWRAMASDFNLPPVVAKEIVASCDKCQLKGEAMHGQVDCSPGIWQLDCTHLEGKVILVAVHVASGYIEAEVIPAETGQETAYFLLKLAGRWPVKTIHTDNGSNFTSTTVKAACWWAGIKQEFGIPYNPQSQGVVESMNKELKKIIGQVRDQAEHLKTAVQMAVFIHNFKRKGGIGGYSAGERIVDIIATDIQTKELQKQITKIQNFRVYYRDSRDPLWKGPAKLLWKGEGAVVIQDNSDIKVVPRRKAKIIRDYGKQMAGDDCVASRQDED</sequence>
<accession>P03367</accession>
<protein>
    <recommendedName>
        <fullName>Gag-Pol polyprotein</fullName>
    </recommendedName>
    <alternativeName>
        <fullName>Pr160Gag-Pol</fullName>
    </alternativeName>
    <component>
        <recommendedName>
            <fullName>Matrix protein p17</fullName>
            <shortName>MA</shortName>
        </recommendedName>
    </component>
    <component>
        <recommendedName>
            <fullName>Capsid protein p24</fullName>
            <shortName>CA</shortName>
        </recommendedName>
    </component>
    <component>
        <recommendedName>
            <fullName evidence="6">Spacer peptide 1</fullName>
            <shortName>SP1</shortName>
        </recommendedName>
        <alternativeName>
            <fullName>p2</fullName>
        </alternativeName>
    </component>
    <component>
        <recommendedName>
            <fullName>Nucleocapsid protein p7</fullName>
            <shortName>NC</shortName>
        </recommendedName>
    </component>
    <component>
        <recommendedName>
            <fullName>Transframe peptide</fullName>
            <shortName>TF</shortName>
        </recommendedName>
    </component>
    <component>
        <recommendedName>
            <fullName>p6-pol</fullName>
            <shortName>p6*</shortName>
        </recommendedName>
    </component>
    <component>
        <recommendedName>
            <fullName>Protease</fullName>
            <ecNumber>3.4.23.16</ecNumber>
        </recommendedName>
        <alternativeName>
            <fullName>PR</fullName>
        </alternativeName>
        <alternativeName>
            <fullName>Retropepsin</fullName>
        </alternativeName>
    </component>
    <component>
        <recommendedName>
            <fullName>Reverse transcriptase/ribonuclease H</fullName>
            <ecNumber>2.7.7.49</ecNumber>
            <ecNumber>2.7.7.7</ecNumber>
            <ecNumber>3.1.26.13</ecNumber>
        </recommendedName>
        <alternativeName>
            <fullName>Exoribonuclease H</fullName>
            <ecNumber>3.1.13.2</ecNumber>
        </alternativeName>
        <alternativeName>
            <fullName>p66 RT</fullName>
        </alternativeName>
    </component>
    <component>
        <recommendedName>
            <fullName>p51 RT</fullName>
        </recommendedName>
    </component>
    <component>
        <recommendedName>
            <fullName>p15</fullName>
        </recommendedName>
    </component>
    <component>
        <recommendedName>
            <fullName>Integrase</fullName>
            <shortName>IN</shortName>
            <ecNumber evidence="4">2.7.7.-</ecNumber>
            <ecNumber evidence="4">3.1.-.-</ecNumber>
        </recommendedName>
    </component>
</protein>
<dbReference type="EC" id="3.4.23.16"/>
<dbReference type="EC" id="2.7.7.49"/>
<dbReference type="EC" id="2.7.7.7"/>
<dbReference type="EC" id="3.1.26.13"/>
<dbReference type="EC" id="3.1.13.2"/>
<dbReference type="EC" id="2.7.7.-" evidence="4"/>
<dbReference type="EC" id="3.1.-.-" evidence="4"/>
<dbReference type="EMBL" id="K02013">
    <property type="status" value="NOT_ANNOTATED_CDS"/>
    <property type="molecule type" value="Genomic_RNA"/>
</dbReference>
<dbReference type="PDB" id="1A8G">
    <property type="method" value="X-ray"/>
    <property type="resolution" value="2.50 A"/>
    <property type="chains" value="A/B=501-599"/>
</dbReference>
<dbReference type="PDB" id="1A8K">
    <property type="method" value="X-ray"/>
    <property type="resolution" value="2.00 A"/>
    <property type="chains" value="A/B/D/E=501-599"/>
</dbReference>
<dbReference type="PDB" id="1A94">
    <property type="method" value="X-ray"/>
    <property type="resolution" value="2.00 A"/>
    <property type="chains" value="A/B/D/E=501-599"/>
</dbReference>
<dbReference type="PDB" id="1AAQ">
    <property type="method" value="X-ray"/>
    <property type="resolution" value="2.50 A"/>
    <property type="chains" value="A/B=501-599"/>
</dbReference>
<dbReference type="PDB" id="1D4S">
    <property type="method" value="X-ray"/>
    <property type="resolution" value="2.50 A"/>
    <property type="chains" value="A/B=501-599"/>
</dbReference>
<dbReference type="PDB" id="1D4Y">
    <property type="method" value="X-ray"/>
    <property type="resolution" value="1.97 A"/>
    <property type="chains" value="A/B=501-599"/>
</dbReference>
<dbReference type="PDB" id="1DAZ">
    <property type="method" value="X-ray"/>
    <property type="resolution" value="1.55 A"/>
    <property type="chains" value="C/D=501-599"/>
</dbReference>
<dbReference type="PDB" id="1DIF">
    <property type="method" value="X-ray"/>
    <property type="resolution" value="1.70 A"/>
    <property type="chains" value="A/B=501-599"/>
</dbReference>
<dbReference type="PDB" id="1FQX">
    <property type="method" value="X-ray"/>
    <property type="resolution" value="3.10 A"/>
    <property type="chains" value="A/B=501-599"/>
</dbReference>
<dbReference type="PDB" id="1HHP">
    <property type="method" value="X-ray"/>
    <property type="resolution" value="2.70 A"/>
    <property type="chains" value="A=501-599"/>
</dbReference>
<dbReference type="PDB" id="1HNI">
    <property type="method" value="X-ray"/>
    <property type="resolution" value="2.80 A"/>
    <property type="chains" value="B=600-1026"/>
</dbReference>
<dbReference type="PDB" id="1HPO">
    <property type="method" value="X-ray"/>
    <property type="resolution" value="2.50 A"/>
    <property type="chains" value="A/B=501-599"/>
</dbReference>
<dbReference type="PDB" id="1HPX">
    <property type="method" value="X-ray"/>
    <property type="resolution" value="2.00 A"/>
    <property type="chains" value="A/B=501-599"/>
</dbReference>
<dbReference type="PDB" id="1HSG">
    <property type="method" value="X-ray"/>
    <property type="resolution" value="2.00 A"/>
    <property type="chains" value="A/B=501-599"/>
</dbReference>
<dbReference type="PDB" id="1HVL">
    <property type="method" value="X-ray"/>
    <property type="resolution" value="1.80 A"/>
    <property type="chains" value="A/B=501-599"/>
</dbReference>
<dbReference type="PDB" id="1IIQ">
    <property type="method" value="X-ray"/>
    <property type="resolution" value="1.83 A"/>
    <property type="chains" value="A/B=501-599"/>
</dbReference>
<dbReference type="PDB" id="1IZI">
    <property type="method" value="X-ray"/>
    <property type="resolution" value="2.15 A"/>
    <property type="chains" value="A/B=501-599"/>
</dbReference>
<dbReference type="PDB" id="1LZQ">
    <property type="method" value="X-ray"/>
    <property type="resolution" value="2.20 A"/>
    <property type="chains" value="A/B=501-599"/>
</dbReference>
<dbReference type="PDB" id="1M0B">
    <property type="method" value="X-ray"/>
    <property type="resolution" value="2.45 A"/>
    <property type="chains" value="A/B=501-599"/>
</dbReference>
<dbReference type="PDB" id="1MRW">
    <property type="method" value="X-ray"/>
    <property type="resolution" value="2.00 A"/>
    <property type="chains" value="A/B=501-599"/>
</dbReference>
<dbReference type="PDB" id="1MRX">
    <property type="method" value="X-ray"/>
    <property type="resolution" value="2.00 A"/>
    <property type="chains" value="A/B=501-599"/>
</dbReference>
<dbReference type="PDB" id="1MSM">
    <property type="method" value="X-ray"/>
    <property type="resolution" value="2.00 A"/>
    <property type="chains" value="A/B=501-599"/>
</dbReference>
<dbReference type="PDB" id="1MSN">
    <property type="method" value="X-ray"/>
    <property type="resolution" value="2.00 A"/>
    <property type="chains" value="A/B=501-599"/>
</dbReference>
<dbReference type="PDB" id="1NH0">
    <property type="method" value="X-ray"/>
    <property type="resolution" value="1.03 A"/>
    <property type="chains" value="A/B=501-599"/>
</dbReference>
<dbReference type="PDB" id="1RL8">
    <property type="method" value="X-ray"/>
    <property type="resolution" value="2.00 A"/>
    <property type="chains" value="A/B=501-599"/>
</dbReference>
<dbReference type="PDB" id="1SDT">
    <property type="method" value="X-ray"/>
    <property type="resolution" value="1.30 A"/>
    <property type="chains" value="A/B=501-599"/>
</dbReference>
<dbReference type="PDB" id="1SDU">
    <property type="method" value="X-ray"/>
    <property type="resolution" value="1.25 A"/>
    <property type="chains" value="A/B=501-599"/>
</dbReference>
<dbReference type="PDB" id="1SDV">
    <property type="method" value="X-ray"/>
    <property type="resolution" value="1.40 A"/>
    <property type="chains" value="A/B=501-599"/>
</dbReference>
<dbReference type="PDB" id="1SGU">
    <property type="method" value="X-ray"/>
    <property type="resolution" value="1.90 A"/>
    <property type="chains" value="A/B=501-599"/>
</dbReference>
<dbReference type="PDB" id="1SH9">
    <property type="method" value="X-ray"/>
    <property type="resolution" value="2.50 A"/>
    <property type="chains" value="A/B=501-599"/>
</dbReference>
<dbReference type="PDB" id="1SP5">
    <property type="method" value="X-ray"/>
    <property type="resolution" value="1.80 A"/>
    <property type="chains" value="A/B=501-599, I=559-563"/>
</dbReference>
<dbReference type="PDB" id="1U8G">
    <property type="method" value="X-ray"/>
    <property type="resolution" value="2.20 A"/>
    <property type="chains" value="A/B=501-599"/>
</dbReference>
<dbReference type="PDB" id="1UPJ">
    <property type="method" value="X-ray"/>
    <property type="resolution" value="2.22 A"/>
    <property type="chains" value="A=501-599"/>
</dbReference>
<dbReference type="PDB" id="1XL2">
    <property type="method" value="X-ray"/>
    <property type="resolution" value="1.50 A"/>
    <property type="chains" value="A/B=501-599"/>
</dbReference>
<dbReference type="PDB" id="1XL5">
    <property type="method" value="X-ray"/>
    <property type="resolution" value="1.73 A"/>
    <property type="chains" value="A/B=501-599"/>
</dbReference>
<dbReference type="PDB" id="1Z8C">
    <property type="method" value="X-ray"/>
    <property type="resolution" value="2.20 A"/>
    <property type="chains" value="A/B=501-599"/>
</dbReference>
<dbReference type="PDB" id="1ZBG">
    <property type="method" value="X-ray"/>
    <property type="resolution" value="2.00 A"/>
    <property type="chains" value="A/B=501-599"/>
</dbReference>
<dbReference type="PDB" id="1ZJ7">
    <property type="method" value="X-ray"/>
    <property type="resolution" value="1.93 A"/>
    <property type="chains" value="A=501-599"/>
</dbReference>
<dbReference type="PDB" id="1ZLF">
    <property type="method" value="X-ray"/>
    <property type="resolution" value="2.30 A"/>
    <property type="chains" value="A/B=501-599"/>
</dbReference>
<dbReference type="PDB" id="1ZPK">
    <property type="method" value="X-ray"/>
    <property type="resolution" value="1.65 A"/>
    <property type="chains" value="A/B=501-599"/>
</dbReference>
<dbReference type="PDB" id="1ZTZ">
    <property type="method" value="X-ray"/>
    <property type="resolution" value="2.15 A"/>
    <property type="chains" value="A/B=501-599"/>
</dbReference>
<dbReference type="PDB" id="2A1E">
    <property type="method" value="X-ray"/>
    <property type="resolution" value="1.30 A"/>
    <property type="chains" value="A/B=501-599"/>
</dbReference>
<dbReference type="PDB" id="2AZ8">
    <property type="method" value="X-ray"/>
    <property type="resolution" value="2.00 A"/>
    <property type="chains" value="A=501-599"/>
</dbReference>
<dbReference type="PDB" id="2AZ9">
    <property type="method" value="X-ray"/>
    <property type="resolution" value="2.50 A"/>
    <property type="chains" value="A=501-599"/>
</dbReference>
<dbReference type="PDB" id="2AZB">
    <property type="method" value="X-ray"/>
    <property type="resolution" value="2.03 A"/>
    <property type="chains" value="A=501-599"/>
</dbReference>
<dbReference type="PDB" id="2AZC">
    <property type="method" value="X-ray"/>
    <property type="resolution" value="2.01 A"/>
    <property type="chains" value="A/B=501-599"/>
</dbReference>
<dbReference type="PDB" id="2B7Z">
    <property type="method" value="X-ray"/>
    <property type="resolution" value="2.20 A"/>
    <property type="chains" value="A/B=501-599"/>
</dbReference>
<dbReference type="PDB" id="2BB9">
    <property type="method" value="X-ray"/>
    <property type="resolution" value="1.35 A"/>
    <property type="chains" value="A/B=501-599"/>
</dbReference>
<dbReference type="PDB" id="2FDE">
    <property type="method" value="X-ray"/>
    <property type="resolution" value="2.70 A"/>
    <property type="chains" value="A/B=501-599"/>
</dbReference>
<dbReference type="PDB" id="2HB2">
    <property type="method" value="X-ray"/>
    <property type="resolution" value="2.30 A"/>
    <property type="chains" value="A=501-598"/>
</dbReference>
<dbReference type="PDB" id="2HB4">
    <property type="method" value="X-ray"/>
    <property type="resolution" value="2.15 A"/>
    <property type="chains" value="A=501-598"/>
</dbReference>
<dbReference type="PDB" id="2HC0">
    <property type="method" value="X-ray"/>
    <property type="resolution" value="1.30 A"/>
    <property type="chains" value="A/B=501-598"/>
</dbReference>
<dbReference type="PDB" id="2HND">
    <property type="method" value="X-ray"/>
    <property type="resolution" value="2.50 A"/>
    <property type="chains" value="B=606-1027"/>
</dbReference>
<dbReference type="PDB" id="2HNY">
    <property type="method" value="X-ray"/>
    <property type="resolution" value="2.50 A"/>
    <property type="chains" value="B=606-1027"/>
</dbReference>
<dbReference type="PDB" id="2IEN">
    <property type="method" value="X-ray"/>
    <property type="resolution" value="1.30 A"/>
    <property type="chains" value="A/B=501-599"/>
</dbReference>
<dbReference type="PDB" id="2O4K">
    <property type="method" value="X-ray"/>
    <property type="resolution" value="1.60 A"/>
    <property type="chains" value="A/B=501-599"/>
</dbReference>
<dbReference type="PDB" id="2O4L">
    <property type="method" value="X-ray"/>
    <property type="resolution" value="1.33 A"/>
    <property type="chains" value="A/B=501-599"/>
</dbReference>
<dbReference type="PDB" id="2O4N">
    <property type="method" value="X-ray"/>
    <property type="resolution" value="2.00 A"/>
    <property type="chains" value="A/B=501-599"/>
</dbReference>
<dbReference type="PDB" id="2O4P">
    <property type="method" value="X-ray"/>
    <property type="resolution" value="1.80 A"/>
    <property type="chains" value="A/B=501-598"/>
</dbReference>
<dbReference type="PDB" id="2O4S">
    <property type="method" value="X-ray"/>
    <property type="resolution" value="1.54 A"/>
    <property type="chains" value="A/B=501-599"/>
</dbReference>
<dbReference type="PDB" id="2P3B">
    <property type="method" value="X-ray"/>
    <property type="resolution" value="2.10 A"/>
    <property type="chains" value="A/B=501-599"/>
</dbReference>
<dbReference type="PDB" id="2PK5">
    <property type="method" value="X-ray"/>
    <property type="resolution" value="1.90 A"/>
    <property type="chains" value="A/B=501-599"/>
</dbReference>
<dbReference type="PDB" id="2PK6">
    <property type="method" value="X-ray"/>
    <property type="resolution" value="1.45 A"/>
    <property type="chains" value="A/B=501-599"/>
</dbReference>
<dbReference type="PDB" id="2PQZ">
    <property type="method" value="X-ray"/>
    <property type="resolution" value="1.55 A"/>
    <property type="chains" value="A/B=501-599"/>
</dbReference>
<dbReference type="PDB" id="2PWC">
    <property type="method" value="X-ray"/>
    <property type="resolution" value="1.78 A"/>
    <property type="chains" value="A/B=501-599"/>
</dbReference>
<dbReference type="PDB" id="2PWR">
    <property type="method" value="X-ray"/>
    <property type="resolution" value="1.50 A"/>
    <property type="chains" value="A/B=501-599"/>
</dbReference>
<dbReference type="PDB" id="2PYM">
    <property type="method" value="X-ray"/>
    <property type="resolution" value="1.90 A"/>
    <property type="chains" value="A/B=501-599"/>
</dbReference>
<dbReference type="PDB" id="2PYN">
    <property type="method" value="X-ray"/>
    <property type="resolution" value="1.85 A"/>
    <property type="chains" value="A/B=501-599"/>
</dbReference>
<dbReference type="PDB" id="2Q63">
    <property type="method" value="X-ray"/>
    <property type="resolution" value="2.20 A"/>
    <property type="chains" value="A/B=501-599"/>
</dbReference>
<dbReference type="PDB" id="2Q64">
    <property type="method" value="X-ray"/>
    <property type="resolution" value="2.50 A"/>
    <property type="chains" value="A/B=501-599"/>
</dbReference>
<dbReference type="PDB" id="2QAK">
    <property type="method" value="X-ray"/>
    <property type="resolution" value="2.20 A"/>
    <property type="chains" value="A/B=501-599"/>
</dbReference>
<dbReference type="PDB" id="2QCI">
    <property type="method" value="X-ray"/>
    <property type="resolution" value="1.20 A"/>
    <property type="chains" value="A/B=501-599"/>
</dbReference>
<dbReference type="PDB" id="2QD6">
    <property type="method" value="X-ray"/>
    <property type="resolution" value="1.28 A"/>
    <property type="chains" value="A/B=501-599"/>
</dbReference>
<dbReference type="PDB" id="2QD7">
    <property type="method" value="X-ray"/>
    <property type="resolution" value="1.11 A"/>
    <property type="chains" value="A/B=501-599"/>
</dbReference>
<dbReference type="PDB" id="2QD8">
    <property type="method" value="X-ray"/>
    <property type="resolution" value="1.35 A"/>
    <property type="chains" value="A/B=501-599"/>
</dbReference>
<dbReference type="PDB" id="2QHC">
    <property type="method" value="X-ray"/>
    <property type="resolution" value="2.80 A"/>
    <property type="chains" value="A/B=501-599"/>
</dbReference>
<dbReference type="PDB" id="2QNN">
    <property type="method" value="X-ray"/>
    <property type="resolution" value="1.48 A"/>
    <property type="chains" value="A/B=501-599"/>
</dbReference>
<dbReference type="PDB" id="2QNP">
    <property type="method" value="X-ray"/>
    <property type="resolution" value="1.41 A"/>
    <property type="chains" value="A/B=501-599"/>
</dbReference>
<dbReference type="PDB" id="2QNQ">
    <property type="method" value="X-ray"/>
    <property type="resolution" value="2.30 A"/>
    <property type="chains" value="A/B=501-599"/>
</dbReference>
<dbReference type="PDB" id="2R43">
    <property type="method" value="X-ray"/>
    <property type="resolution" value="1.58 A"/>
    <property type="chains" value="A/B=501-599"/>
</dbReference>
<dbReference type="PDB" id="2UPJ">
    <property type="method" value="X-ray"/>
    <property type="resolution" value="3.00 A"/>
    <property type="chains" value="A/B=501-599"/>
</dbReference>
<dbReference type="PDB" id="2Z4O">
    <property type="method" value="X-ray"/>
    <property type="resolution" value="1.60 A"/>
    <property type="chains" value="A/B=501-599"/>
</dbReference>
<dbReference type="PDB" id="2ZGA">
    <property type="method" value="X-ray"/>
    <property type="resolution" value="1.65 A"/>
    <property type="chains" value="A=501-599"/>
</dbReference>
<dbReference type="PDB" id="2ZYE">
    <property type="method" value="Neutron"/>
    <property type="resolution" value="1.90 A"/>
    <property type="chains" value="A/B=501-599"/>
</dbReference>
<dbReference type="PDB" id="3A2O">
    <property type="method" value="X-ray"/>
    <property type="resolution" value="0.88 A"/>
    <property type="chains" value="A/B=501-599"/>
</dbReference>
<dbReference type="PDB" id="3BHE">
    <property type="method" value="X-ray"/>
    <property type="resolution" value="1.75 A"/>
    <property type="chains" value="A/B=501-599"/>
</dbReference>
<dbReference type="PDB" id="3BVA">
    <property type="method" value="X-ray"/>
    <property type="resolution" value="1.05 A"/>
    <property type="chains" value="A/B=501-599"/>
</dbReference>
<dbReference type="PDB" id="3BVB">
    <property type="method" value="X-ray"/>
    <property type="resolution" value="1.30 A"/>
    <property type="chains" value="A/B=501-599"/>
</dbReference>
<dbReference type="PDB" id="3CKT">
    <property type="method" value="X-ray"/>
    <property type="resolution" value="1.65 A"/>
    <property type="chains" value="A/B=501-599"/>
</dbReference>
<dbReference type="PDB" id="3DJK">
    <property type="method" value="X-ray"/>
    <property type="resolution" value="1.00 A"/>
    <property type="chains" value="A/B=501-599"/>
</dbReference>
<dbReference type="PDB" id="3DK1">
    <property type="method" value="X-ray"/>
    <property type="resolution" value="1.07 A"/>
    <property type="chains" value="A/B=501-599"/>
</dbReference>
<dbReference type="PDB" id="3FX5">
    <property type="method" value="X-ray"/>
    <property type="resolution" value="0.93 A"/>
    <property type="chains" value="A/B=501-599"/>
</dbReference>
<dbReference type="PDB" id="3GGU">
    <property type="method" value="X-ray"/>
    <property type="resolution" value="1.80 A"/>
    <property type="chains" value="A/B=501-599"/>
</dbReference>
<dbReference type="PDB" id="3H5B">
    <property type="method" value="X-ray"/>
    <property type="resolution" value="1.29 A"/>
    <property type="chains" value="A/B=501-599"/>
</dbReference>
<dbReference type="PDB" id="3I6O">
    <property type="method" value="X-ray"/>
    <property type="resolution" value="1.17 A"/>
    <property type="chains" value="A/B=501-599"/>
</dbReference>
<dbReference type="PDB" id="3I8W">
    <property type="method" value="X-ray"/>
    <property type="resolution" value="1.70 A"/>
    <property type="chains" value="A=501-599"/>
</dbReference>
<dbReference type="PDB" id="3JVW">
    <property type="method" value="X-ray"/>
    <property type="resolution" value="1.80 A"/>
    <property type="chains" value="A/B=501-599"/>
</dbReference>
<dbReference type="PDB" id="3JVY">
    <property type="method" value="X-ray"/>
    <property type="resolution" value="1.60 A"/>
    <property type="chains" value="A/B=501-599"/>
</dbReference>
<dbReference type="PDB" id="3JW2">
    <property type="method" value="X-ray"/>
    <property type="resolution" value="1.80 A"/>
    <property type="chains" value="A/B=501-599"/>
</dbReference>
<dbReference type="PDB" id="3KDB">
    <property type="method" value="X-ray"/>
    <property type="resolution" value="1.66 A"/>
    <property type="chains" value="A/B=501-599"/>
</dbReference>
<dbReference type="PDB" id="3KDC">
    <property type="method" value="X-ray"/>
    <property type="resolution" value="2.20 A"/>
    <property type="chains" value="A/B=501-599"/>
</dbReference>
<dbReference type="PDB" id="3KDD">
    <property type="method" value="X-ray"/>
    <property type="resolution" value="1.80 A"/>
    <property type="chains" value="A/B=501-599"/>
</dbReference>
<dbReference type="PDB" id="3NDU">
    <property type="method" value="X-ray"/>
    <property type="resolution" value="1.25 A"/>
    <property type="chains" value="A/B/C/D=501-599"/>
</dbReference>
<dbReference type="PDB" id="3NDW">
    <property type="method" value="X-ray"/>
    <property type="resolution" value="1.14 A"/>
    <property type="chains" value="A/B=501-599"/>
</dbReference>
<dbReference type="PDB" id="3NDX">
    <property type="method" value="X-ray"/>
    <property type="resolution" value="1.03 A"/>
    <property type="chains" value="A/B=501-599"/>
</dbReference>
<dbReference type="PDB" id="3NLS">
    <property type="method" value="X-ray"/>
    <property type="resolution" value="1.70 A"/>
    <property type="chains" value="A/B=501-599"/>
</dbReference>
<dbReference type="PDB" id="3PWM">
    <property type="method" value="X-ray"/>
    <property type="resolution" value="1.46 A"/>
    <property type="chains" value="A/B=501-599"/>
</dbReference>
<dbReference type="PDB" id="3PWR">
    <property type="method" value="X-ray"/>
    <property type="resolution" value="1.45 A"/>
    <property type="chains" value="A/B=501-599"/>
</dbReference>
<dbReference type="PDB" id="3QBF">
    <property type="method" value="X-ray"/>
    <property type="resolution" value="1.45 A"/>
    <property type="chains" value="A/B=501-599"/>
</dbReference>
<dbReference type="PDB" id="3QIH">
    <property type="method" value="X-ray"/>
    <property type="resolution" value="1.39 A"/>
    <property type="chains" value="A/B=501-599"/>
</dbReference>
<dbReference type="PDB" id="3QN8">
    <property type="method" value="X-ray"/>
    <property type="resolution" value="1.38 A"/>
    <property type="chains" value="A/B=501-599"/>
</dbReference>
<dbReference type="PDB" id="3QP0">
    <property type="method" value="X-ray"/>
    <property type="resolution" value="1.45 A"/>
    <property type="chains" value="A/B=501-599"/>
</dbReference>
<dbReference type="PDB" id="3QPJ">
    <property type="method" value="X-ray"/>
    <property type="resolution" value="1.61 A"/>
    <property type="chains" value="A/B=501-599"/>
</dbReference>
<dbReference type="PDB" id="3QRM">
    <property type="method" value="X-ray"/>
    <property type="resolution" value="1.73 A"/>
    <property type="chains" value="A/B=501-599"/>
</dbReference>
<dbReference type="PDB" id="3QRO">
    <property type="method" value="X-ray"/>
    <property type="resolution" value="1.62 A"/>
    <property type="chains" value="A/B=501-599"/>
</dbReference>
<dbReference type="PDB" id="3QRS">
    <property type="method" value="X-ray"/>
    <property type="resolution" value="1.59 A"/>
    <property type="chains" value="A/B=501-599"/>
</dbReference>
<dbReference type="PDB" id="3ST5">
    <property type="method" value="X-ray"/>
    <property type="resolution" value="1.45 A"/>
    <property type="chains" value="A/B=501-599"/>
</dbReference>
<dbReference type="PDB" id="3T11">
    <property type="method" value="X-ray"/>
    <property type="resolution" value="2.22 A"/>
    <property type="chains" value="A/B=501-599"/>
</dbReference>
<dbReference type="PDB" id="3T3C">
    <property type="method" value="X-ray"/>
    <property type="resolution" value="2.10 A"/>
    <property type="chains" value="A/B=501-599"/>
</dbReference>
<dbReference type="PDB" id="3TOF">
    <property type="method" value="X-ray"/>
    <property type="resolution" value="1.45 A"/>
    <property type="chains" value="A/B=501-599"/>
</dbReference>
<dbReference type="PDB" id="3TOG">
    <property type="method" value="X-ray"/>
    <property type="resolution" value="1.24 A"/>
    <property type="chains" value="A/B/C/D=501-599"/>
</dbReference>
<dbReference type="PDB" id="3TOH">
    <property type="method" value="X-ray"/>
    <property type="resolution" value="1.12 A"/>
    <property type="chains" value="A/B=501-599"/>
</dbReference>
<dbReference type="PDB" id="3TTP">
    <property type="method" value="X-ray"/>
    <property type="resolution" value="2.23 A"/>
    <property type="chains" value="A/B=501-599"/>
</dbReference>
<dbReference type="PDB" id="3U7S">
    <property type="method" value="X-ray"/>
    <property type="resolution" value="2.05 A"/>
    <property type="chains" value="A/B=501-599"/>
</dbReference>
<dbReference type="PDB" id="3UCB">
    <property type="method" value="X-ray"/>
    <property type="resolution" value="1.38 A"/>
    <property type="chains" value="A/B=501-599"/>
</dbReference>
<dbReference type="PDB" id="3UF3">
    <property type="method" value="X-ray"/>
    <property type="resolution" value="1.63 A"/>
    <property type="chains" value="A/B=501-599"/>
</dbReference>
<dbReference type="PDB" id="3UFN">
    <property type="method" value="X-ray"/>
    <property type="resolution" value="1.45 A"/>
    <property type="chains" value="A/B=501-599"/>
</dbReference>
<dbReference type="PDB" id="3UHL">
    <property type="method" value="X-ray"/>
    <property type="resolution" value="2.20 A"/>
    <property type="chains" value="A/B/C/D=501-599"/>
</dbReference>
<dbReference type="PDB" id="3VF5">
    <property type="method" value="X-ray"/>
    <property type="resolution" value="1.25 A"/>
    <property type="chains" value="A/B=501-599"/>
</dbReference>
<dbReference type="PDB" id="3VF7">
    <property type="method" value="X-ray"/>
    <property type="resolution" value="1.30 A"/>
    <property type="chains" value="A/B=501-599"/>
</dbReference>
<dbReference type="PDB" id="3VFB">
    <property type="method" value="X-ray"/>
    <property type="resolution" value="1.55 A"/>
    <property type="chains" value="A/B=501-599"/>
</dbReference>
<dbReference type="PDB" id="4DFG">
    <property type="method" value="X-ray"/>
    <property type="resolution" value="1.23 A"/>
    <property type="chains" value="A/B=501-599"/>
</dbReference>
<dbReference type="PDB" id="4FAF">
    <property type="method" value="X-ray"/>
    <property type="resolution" value="2.10 A"/>
    <property type="chains" value="D=361-367"/>
</dbReference>
<dbReference type="PDB" id="4FE6">
    <property type="method" value="X-ray"/>
    <property type="resolution" value="2.00 A"/>
    <property type="chains" value="A=501-599"/>
</dbReference>
<dbReference type="PDB" id="4FL8">
    <property type="method" value="X-ray"/>
    <property type="resolution" value="1.20 A"/>
    <property type="chains" value="A/B=501-599"/>
</dbReference>
<dbReference type="PDB" id="4FLG">
    <property type="method" value="X-ray"/>
    <property type="resolution" value="1.31 A"/>
    <property type="chains" value="A/B=501-599"/>
</dbReference>
<dbReference type="PDB" id="4FM6">
    <property type="method" value="X-ray"/>
    <property type="resolution" value="1.40 A"/>
    <property type="chains" value="A/B=501-599"/>
</dbReference>
<dbReference type="PDB" id="4GB2">
    <property type="method" value="X-ray"/>
    <property type="resolution" value="1.79 A"/>
    <property type="chains" value="A/B=501-599"/>
</dbReference>
<dbReference type="PDB" id="4HDB">
    <property type="method" value="X-ray"/>
    <property type="resolution" value="1.49 A"/>
    <property type="chains" value="A/B=501-599"/>
</dbReference>
<dbReference type="PDB" id="4HDF">
    <property type="method" value="X-ray"/>
    <property type="resolution" value="1.29 A"/>
    <property type="chains" value="A/B=501-599"/>
</dbReference>
<dbReference type="PDB" id="4HDP">
    <property type="method" value="X-ray"/>
    <property type="resolution" value="1.22 A"/>
    <property type="chains" value="A/B=501-599"/>
</dbReference>
<dbReference type="PDB" id="4HE9">
    <property type="method" value="X-ray"/>
    <property type="resolution" value="1.06 A"/>
    <property type="chains" value="A/B=501-599"/>
</dbReference>
<dbReference type="PDB" id="4HEG">
    <property type="method" value="X-ray"/>
    <property type="resolution" value="1.46 A"/>
    <property type="chains" value="A/B=501-599"/>
</dbReference>
<dbReference type="PDB" id="4HLA">
    <property type="method" value="X-ray"/>
    <property type="resolution" value="1.95 A"/>
    <property type="chains" value="A/B=501-599"/>
</dbReference>
<dbReference type="PDB" id="4J54">
    <property type="method" value="X-ray"/>
    <property type="resolution" value="1.55 A"/>
    <property type="chains" value="A/B=501-599"/>
</dbReference>
<dbReference type="PDB" id="4J55">
    <property type="method" value="X-ray"/>
    <property type="resolution" value="1.31 A"/>
    <property type="chains" value="A/B=501-599"/>
</dbReference>
<dbReference type="PDB" id="4J5J">
    <property type="method" value="X-ray"/>
    <property type="resolution" value="1.80 A"/>
    <property type="chains" value="A/B=501-599"/>
</dbReference>
<dbReference type="PDB" id="4JEC">
    <property type="method" value="Other"/>
    <property type="resolution" value="2.00 A"/>
    <property type="chains" value="A/B=501-599"/>
</dbReference>
<dbReference type="PDB" id="4LL3">
    <property type="method" value="X-ray"/>
    <property type="resolution" value="1.95 A"/>
    <property type="chains" value="A/B=501-599"/>
</dbReference>
<dbReference type="PDB" id="5E5K">
    <property type="method" value="Other"/>
    <property type="resolution" value="1.75 A"/>
    <property type="chains" value="A/B=501-599"/>
</dbReference>
<dbReference type="PDB" id="5YOK">
    <property type="method" value="X-ray"/>
    <property type="resolution" value="0.85 A"/>
    <property type="chains" value="A/B=500-599"/>
</dbReference>
<dbReference type="PDB" id="6BSH">
    <property type="method" value="X-ray"/>
    <property type="resolution" value="2.65 A"/>
    <property type="chains" value="A=600-1156"/>
</dbReference>
<dbReference type="PDB" id="6P9A">
    <property type="method" value="X-ray"/>
    <property type="resolution" value="1.66 A"/>
    <property type="chains" value="A/B=501-599"/>
</dbReference>
<dbReference type="PDB" id="6P9B">
    <property type="method" value="X-ray"/>
    <property type="resolution" value="1.75 A"/>
    <property type="chains" value="A/B=501-599"/>
</dbReference>
<dbReference type="PDB" id="6UWB">
    <property type="method" value="X-ray"/>
    <property type="resolution" value="1.95 A"/>
    <property type="chains" value="A/B=501-599"/>
</dbReference>
<dbReference type="PDB" id="6UWC">
    <property type="method" value="X-ray"/>
    <property type="resolution" value="1.95 A"/>
    <property type="chains" value="A/B=501-599"/>
</dbReference>
<dbReference type="PDB" id="6VCE">
    <property type="method" value="X-ray"/>
    <property type="resolution" value="1.18 A"/>
    <property type="chains" value="A/B=501-599"/>
</dbReference>
<dbReference type="PDB" id="6VLM">
    <property type="method" value="X-ray"/>
    <property type="resolution" value="2.32 A"/>
    <property type="chains" value="A/B=1208-1371"/>
</dbReference>
<dbReference type="PDB" id="6VOD">
    <property type="method" value="X-ray"/>
    <property type="resolution" value="1.25 A"/>
    <property type="chains" value="A/B=501-599"/>
</dbReference>
<dbReference type="PDB" id="6VOE">
    <property type="method" value="X-ray"/>
    <property type="resolution" value="1.30 A"/>
    <property type="chains" value="A/B=501-599"/>
</dbReference>
<dbReference type="PDB" id="7DZM">
    <property type="method" value="X-ray"/>
    <property type="resolution" value="2.25 A"/>
    <property type="chains" value="C=180-188"/>
</dbReference>
<dbReference type="PDB" id="7DZN">
    <property type="method" value="X-ray"/>
    <property type="resolution" value="2.63 A"/>
    <property type="chains" value="C=180-188"/>
</dbReference>
<dbReference type="PDB" id="7M9G">
    <property type="method" value="X-ray"/>
    <property type="resolution" value="1.87 A"/>
    <property type="chains" value="A/B=501-599"/>
</dbReference>
<dbReference type="PDB" id="7M9H">
    <property type="method" value="X-ray"/>
    <property type="resolution" value="1.89 A"/>
    <property type="chains" value="A/B=501-599"/>
</dbReference>
<dbReference type="PDB" id="7M9I">
    <property type="method" value="X-ray"/>
    <property type="resolution" value="1.82 A"/>
    <property type="chains" value="A/B=501-599"/>
</dbReference>
<dbReference type="PDB" id="7M9J">
    <property type="method" value="X-ray"/>
    <property type="resolution" value="1.86 A"/>
    <property type="chains" value="A/B=501-599"/>
</dbReference>
<dbReference type="PDB" id="7M9K">
    <property type="method" value="X-ray"/>
    <property type="resolution" value="1.84 A"/>
    <property type="chains" value="A/B=501-599"/>
</dbReference>
<dbReference type="PDB" id="7M9L">
    <property type="method" value="X-ray"/>
    <property type="resolution" value="1.75 A"/>
    <property type="chains" value="A/B=501-599"/>
</dbReference>
<dbReference type="PDB" id="7M9M">
    <property type="method" value="X-ray"/>
    <property type="resolution" value="1.88 A"/>
    <property type="chains" value="A/B=501-599"/>
</dbReference>
<dbReference type="PDB" id="7M9N">
    <property type="method" value="X-ray"/>
    <property type="resolution" value="1.82 A"/>
    <property type="chains" value="A/B=501-599"/>
</dbReference>
<dbReference type="PDB" id="7M9O">
    <property type="method" value="X-ray"/>
    <property type="resolution" value="1.90 A"/>
    <property type="chains" value="A/B=501-599"/>
</dbReference>
<dbReference type="PDB" id="7M9P">
    <property type="method" value="X-ray"/>
    <property type="resolution" value="1.82 A"/>
    <property type="chains" value="A/B=501-599"/>
</dbReference>
<dbReference type="PDB" id="7M9Q">
    <property type="method" value="X-ray"/>
    <property type="resolution" value="1.95 A"/>
    <property type="chains" value="A/B=501-599"/>
</dbReference>
<dbReference type="PDB" id="7M9R">
    <property type="method" value="X-ray"/>
    <property type="resolution" value="1.89 A"/>
    <property type="chains" value="A/B=501-599"/>
</dbReference>
<dbReference type="PDB" id="7M9S">
    <property type="method" value="X-ray"/>
    <property type="resolution" value="1.96 A"/>
    <property type="chains" value="A/B=501-599"/>
</dbReference>
<dbReference type="PDB" id="7M9T">
    <property type="method" value="X-ray"/>
    <property type="resolution" value="1.95 A"/>
    <property type="chains" value="A/B=501-599"/>
</dbReference>
<dbReference type="PDB" id="7M9U">
    <property type="method" value="X-ray"/>
    <property type="resolution" value="1.91 A"/>
    <property type="chains" value="A/B=501-599"/>
</dbReference>
<dbReference type="PDB" id="7M9V">
    <property type="method" value="X-ray"/>
    <property type="resolution" value="1.89 A"/>
    <property type="chains" value="A/B=501-599"/>
</dbReference>
<dbReference type="PDB" id="7M9W">
    <property type="method" value="X-ray"/>
    <property type="resolution" value="1.90 A"/>
    <property type="chains" value="A/B=501-599"/>
</dbReference>
<dbReference type="PDB" id="7M9X">
    <property type="method" value="X-ray"/>
    <property type="resolution" value="1.83 A"/>
    <property type="chains" value="A/B=501-599"/>
</dbReference>
<dbReference type="PDB" id="7M9Z">
    <property type="method" value="X-ray"/>
    <property type="resolution" value="1.83 A"/>
    <property type="chains" value="A/B=501-599"/>
</dbReference>
<dbReference type="PDB" id="7MA0">
    <property type="method" value="X-ray"/>
    <property type="resolution" value="1.92 A"/>
    <property type="chains" value="A/B=501-599"/>
</dbReference>
<dbReference type="PDB" id="7MA1">
    <property type="method" value="X-ray"/>
    <property type="resolution" value="1.85 A"/>
    <property type="chains" value="A/B=501-599"/>
</dbReference>
<dbReference type="PDB" id="7MA2">
    <property type="method" value="X-ray"/>
    <property type="resolution" value="1.87 A"/>
    <property type="chains" value="A/B=501-599"/>
</dbReference>
<dbReference type="PDB" id="7MA3">
    <property type="method" value="X-ray"/>
    <property type="resolution" value="1.97 A"/>
    <property type="chains" value="A/B=501-599"/>
</dbReference>
<dbReference type="PDB" id="7MA4">
    <property type="method" value="X-ray"/>
    <property type="resolution" value="1.99 A"/>
    <property type="chains" value="A/B=501-599"/>
</dbReference>
<dbReference type="PDB" id="7MA5">
    <property type="method" value="X-ray"/>
    <property type="resolution" value="1.98 A"/>
    <property type="chains" value="A/B=501-599"/>
</dbReference>
<dbReference type="PDB" id="7MA6">
    <property type="method" value="X-ray"/>
    <property type="resolution" value="2.00 A"/>
    <property type="chains" value="A/B=501-599"/>
</dbReference>
<dbReference type="PDB" id="7MA7">
    <property type="method" value="X-ray"/>
    <property type="resolution" value="1.92 A"/>
    <property type="chains" value="A/B=501-599"/>
</dbReference>
<dbReference type="PDB" id="7MA8">
    <property type="method" value="X-ray"/>
    <property type="resolution" value="1.90 A"/>
    <property type="chains" value="A/B=501-599"/>
</dbReference>
<dbReference type="PDB" id="7MA9">
    <property type="method" value="X-ray"/>
    <property type="resolution" value="1.90 A"/>
    <property type="chains" value="A/B=501-599"/>
</dbReference>
<dbReference type="PDB" id="7MAA">
    <property type="method" value="X-ray"/>
    <property type="resolution" value="1.93 A"/>
    <property type="chains" value="A/B=501-599"/>
</dbReference>
<dbReference type="PDB" id="7MAB">
    <property type="method" value="X-ray"/>
    <property type="resolution" value="1.88 A"/>
    <property type="chains" value="A/B=501-599"/>
</dbReference>
<dbReference type="PDB" id="7MAC">
    <property type="method" value="X-ray"/>
    <property type="resolution" value="1.70 A"/>
    <property type="chains" value="A/B=501-599"/>
</dbReference>
<dbReference type="PDB" id="7MAD">
    <property type="method" value="X-ray"/>
    <property type="resolution" value="1.70 A"/>
    <property type="chains" value="A/B=501-599"/>
</dbReference>
<dbReference type="PDB" id="7MAE">
    <property type="method" value="X-ray"/>
    <property type="resolution" value="1.74 A"/>
    <property type="chains" value="A/B=501-599"/>
</dbReference>
<dbReference type="PDB" id="7MAF">
    <property type="method" value="X-ray"/>
    <property type="resolution" value="1.90 A"/>
    <property type="chains" value="A/B=501-599"/>
</dbReference>
<dbReference type="PDB" id="7MAG">
    <property type="method" value="X-ray"/>
    <property type="resolution" value="1.92 A"/>
    <property type="chains" value="A/B=501-599"/>
</dbReference>
<dbReference type="PDB" id="7MAH">
    <property type="method" value="X-ray"/>
    <property type="resolution" value="1.88 A"/>
    <property type="chains" value="A/B=501-599"/>
</dbReference>
<dbReference type="PDB" id="7MAI">
    <property type="method" value="X-ray"/>
    <property type="resolution" value="1.79 A"/>
    <property type="chains" value="A/B=501-599"/>
</dbReference>
<dbReference type="PDB" id="7MAJ">
    <property type="method" value="X-ray"/>
    <property type="resolution" value="1.87 A"/>
    <property type="chains" value="A/B=501-599"/>
</dbReference>
<dbReference type="PDB" id="7MAK">
    <property type="method" value="X-ray"/>
    <property type="resolution" value="1.97 A"/>
    <property type="chains" value="A/B=501-599"/>
</dbReference>
<dbReference type="PDB" id="7MAL">
    <property type="method" value="X-ray"/>
    <property type="resolution" value="1.90 A"/>
    <property type="chains" value="A/B=501-599"/>
</dbReference>
<dbReference type="PDB" id="7MAN">
    <property type="method" value="X-ray"/>
    <property type="resolution" value="1.89 A"/>
    <property type="chains" value="A/B=501-599"/>
</dbReference>
<dbReference type="PDB" id="7MAO">
    <property type="method" value="X-ray"/>
    <property type="resolution" value="1.86 A"/>
    <property type="chains" value="A/B=501-599"/>
</dbReference>
<dbReference type="PDB" id="7MAP">
    <property type="method" value="X-ray"/>
    <property type="resolution" value="1.95 A"/>
    <property type="chains" value="A/B=501-599"/>
</dbReference>
<dbReference type="PDB" id="7MAQ">
    <property type="method" value="X-ray"/>
    <property type="resolution" value="1.93 A"/>
    <property type="chains" value="A/B=501-599"/>
</dbReference>
<dbReference type="PDB" id="7MAR">
    <property type="method" value="X-ray"/>
    <property type="resolution" value="1.70 A"/>
    <property type="chains" value="A/B/C/D=501-599"/>
</dbReference>
<dbReference type="PDB" id="7MAS">
    <property type="method" value="X-ray"/>
    <property type="resolution" value="1.50 A"/>
    <property type="chains" value="A/B/C/D=501-599"/>
</dbReference>
<dbReference type="PDB" id="7N6T">
    <property type="method" value="X-ray"/>
    <property type="resolution" value="1.32 A"/>
    <property type="chains" value="A/B=501-599"/>
</dbReference>
<dbReference type="PDB" id="7N6V">
    <property type="method" value="X-ray"/>
    <property type="resolution" value="1.39 A"/>
    <property type="chains" value="A/B=501-599"/>
</dbReference>
<dbReference type="PDB" id="7N6X">
    <property type="method" value="X-ray"/>
    <property type="resolution" value="1.47 A"/>
    <property type="chains" value="A/B=501-599"/>
</dbReference>
<dbReference type="PDB" id="7TO5">
    <property type="method" value="X-ray"/>
    <property type="resolution" value="1.13 A"/>
    <property type="chains" value="A/B=501-599"/>
</dbReference>
<dbReference type="PDB" id="7TO6">
    <property type="method" value="X-ray"/>
    <property type="resolution" value="1.21 A"/>
    <property type="chains" value="A/B=501-599"/>
</dbReference>
<dbReference type="PDB" id="7UPJ">
    <property type="method" value="X-ray"/>
    <property type="resolution" value="2.00 A"/>
    <property type="chains" value="A/B=501-599"/>
</dbReference>
<dbReference type="PDB" id="8DCH">
    <property type="method" value="X-ray"/>
    <property type="resolution" value="1.25 A"/>
    <property type="chains" value="A/B=501-599"/>
</dbReference>
<dbReference type="PDB" id="8DCI">
    <property type="method" value="X-ray"/>
    <property type="resolution" value="1.62 A"/>
    <property type="chains" value="A/B=501-599"/>
</dbReference>
<dbReference type="PDB" id="8FUI">
    <property type="method" value="X-ray"/>
    <property type="resolution" value="1.25 A"/>
    <property type="chains" value="A/B=501-599"/>
</dbReference>
<dbReference type="PDB" id="8FUJ">
    <property type="method" value="X-ray"/>
    <property type="resolution" value="1.12 A"/>
    <property type="chains" value="A/B=501-599"/>
</dbReference>
<dbReference type="PDB" id="8VB1">
    <property type="method" value="X-ray"/>
    <property type="resolution" value="1.30 A"/>
    <property type="chains" value="A/B=501-599"/>
</dbReference>
<dbReference type="PDBsum" id="1A8G"/>
<dbReference type="PDBsum" id="1A8K"/>
<dbReference type="PDBsum" id="1A94"/>
<dbReference type="PDBsum" id="1AAQ"/>
<dbReference type="PDBsum" id="1D4S"/>
<dbReference type="PDBsum" id="1D4Y"/>
<dbReference type="PDBsum" id="1DAZ"/>
<dbReference type="PDBsum" id="1DIF"/>
<dbReference type="PDBsum" id="1FQX"/>
<dbReference type="PDBsum" id="1HHP"/>
<dbReference type="PDBsum" id="1HNI"/>
<dbReference type="PDBsum" id="1HPO"/>
<dbReference type="PDBsum" id="1HPX"/>
<dbReference type="PDBsum" id="1HSG"/>
<dbReference type="PDBsum" id="1HVL"/>
<dbReference type="PDBsum" id="1IIQ"/>
<dbReference type="PDBsum" id="1IZI"/>
<dbReference type="PDBsum" id="1LZQ"/>
<dbReference type="PDBsum" id="1M0B"/>
<dbReference type="PDBsum" id="1MRW"/>
<dbReference type="PDBsum" id="1MRX"/>
<dbReference type="PDBsum" id="1MSM"/>
<dbReference type="PDBsum" id="1MSN"/>
<dbReference type="PDBsum" id="1NH0"/>
<dbReference type="PDBsum" id="1RL8"/>
<dbReference type="PDBsum" id="1SDT"/>
<dbReference type="PDBsum" id="1SDU"/>
<dbReference type="PDBsum" id="1SDV"/>
<dbReference type="PDBsum" id="1SGU"/>
<dbReference type="PDBsum" id="1SH9"/>
<dbReference type="PDBsum" id="1SP5"/>
<dbReference type="PDBsum" id="1U8G"/>
<dbReference type="PDBsum" id="1UPJ"/>
<dbReference type="PDBsum" id="1XL2"/>
<dbReference type="PDBsum" id="1XL5"/>
<dbReference type="PDBsum" id="1Z8C"/>
<dbReference type="PDBsum" id="1ZBG"/>
<dbReference type="PDBsum" id="1ZJ7"/>
<dbReference type="PDBsum" id="1ZLF"/>
<dbReference type="PDBsum" id="1ZPK"/>
<dbReference type="PDBsum" id="1ZTZ"/>
<dbReference type="PDBsum" id="2A1E"/>
<dbReference type="PDBsum" id="2AZ8"/>
<dbReference type="PDBsum" id="2AZ9"/>
<dbReference type="PDBsum" id="2AZB"/>
<dbReference type="PDBsum" id="2AZC"/>
<dbReference type="PDBsum" id="2B7Z"/>
<dbReference type="PDBsum" id="2BB9"/>
<dbReference type="PDBsum" id="2FDE"/>
<dbReference type="PDBsum" id="2HB2"/>
<dbReference type="PDBsum" id="2HB4"/>
<dbReference type="PDBsum" id="2HC0"/>
<dbReference type="PDBsum" id="2HND"/>
<dbReference type="PDBsum" id="2HNY"/>
<dbReference type="PDBsum" id="2IEN"/>
<dbReference type="PDBsum" id="2O4K"/>
<dbReference type="PDBsum" id="2O4L"/>
<dbReference type="PDBsum" id="2O4N"/>
<dbReference type="PDBsum" id="2O4P"/>
<dbReference type="PDBsum" id="2O4S"/>
<dbReference type="PDBsum" id="2P3B"/>
<dbReference type="PDBsum" id="2PK5"/>
<dbReference type="PDBsum" id="2PK6"/>
<dbReference type="PDBsum" id="2PQZ"/>
<dbReference type="PDBsum" id="2PWC"/>
<dbReference type="PDBsum" id="2PWR"/>
<dbReference type="PDBsum" id="2PYM"/>
<dbReference type="PDBsum" id="2PYN"/>
<dbReference type="PDBsum" id="2Q63"/>
<dbReference type="PDBsum" id="2Q64"/>
<dbReference type="PDBsum" id="2QAK"/>
<dbReference type="PDBsum" id="2QCI"/>
<dbReference type="PDBsum" id="2QD6"/>
<dbReference type="PDBsum" id="2QD7"/>
<dbReference type="PDBsum" id="2QD8"/>
<dbReference type="PDBsum" id="2QHC"/>
<dbReference type="PDBsum" id="2QNN"/>
<dbReference type="PDBsum" id="2QNP"/>
<dbReference type="PDBsum" id="2QNQ"/>
<dbReference type="PDBsum" id="2R43"/>
<dbReference type="PDBsum" id="2UPJ"/>
<dbReference type="PDBsum" id="2Z4O"/>
<dbReference type="PDBsum" id="2ZGA"/>
<dbReference type="PDBsum" id="2ZYE"/>
<dbReference type="PDBsum" id="3A2O"/>
<dbReference type="PDBsum" id="3BHE"/>
<dbReference type="PDBsum" id="3BVA"/>
<dbReference type="PDBsum" id="3BVB"/>
<dbReference type="PDBsum" id="3CKT"/>
<dbReference type="PDBsum" id="3DJK"/>
<dbReference type="PDBsum" id="3DK1"/>
<dbReference type="PDBsum" id="3FX5"/>
<dbReference type="PDBsum" id="3GGU"/>
<dbReference type="PDBsum" id="3H5B"/>
<dbReference type="PDBsum" id="3I6O"/>
<dbReference type="PDBsum" id="3I8W"/>
<dbReference type="PDBsum" id="3JVW"/>
<dbReference type="PDBsum" id="3JVY"/>
<dbReference type="PDBsum" id="3JW2"/>
<dbReference type="PDBsum" id="3KDB"/>
<dbReference type="PDBsum" id="3KDC"/>
<dbReference type="PDBsum" id="3KDD"/>
<dbReference type="PDBsum" id="3NDU"/>
<dbReference type="PDBsum" id="3NDW"/>
<dbReference type="PDBsum" id="3NDX"/>
<dbReference type="PDBsum" id="3NLS"/>
<dbReference type="PDBsum" id="3PWM"/>
<dbReference type="PDBsum" id="3PWR"/>
<dbReference type="PDBsum" id="3QBF"/>
<dbReference type="PDBsum" id="3QIH"/>
<dbReference type="PDBsum" id="3QN8"/>
<dbReference type="PDBsum" id="3QP0"/>
<dbReference type="PDBsum" id="3QPJ"/>
<dbReference type="PDBsum" id="3QRM"/>
<dbReference type="PDBsum" id="3QRO"/>
<dbReference type="PDBsum" id="3QRS"/>
<dbReference type="PDBsum" id="3ST5"/>
<dbReference type="PDBsum" id="3T11"/>
<dbReference type="PDBsum" id="3T3C"/>
<dbReference type="PDBsum" id="3TOF"/>
<dbReference type="PDBsum" id="3TOG"/>
<dbReference type="PDBsum" id="3TOH"/>
<dbReference type="PDBsum" id="3TTP"/>
<dbReference type="PDBsum" id="3U7S"/>
<dbReference type="PDBsum" id="3UCB"/>
<dbReference type="PDBsum" id="3UF3"/>
<dbReference type="PDBsum" id="3UFN"/>
<dbReference type="PDBsum" id="3UHL"/>
<dbReference type="PDBsum" id="3VF5"/>
<dbReference type="PDBsum" id="3VF7"/>
<dbReference type="PDBsum" id="3VFB"/>
<dbReference type="PDBsum" id="4DFG"/>
<dbReference type="PDBsum" id="4FAF"/>
<dbReference type="PDBsum" id="4FE6"/>
<dbReference type="PDBsum" id="4FL8"/>
<dbReference type="PDBsum" id="4FLG"/>
<dbReference type="PDBsum" id="4FM6"/>
<dbReference type="PDBsum" id="4GB2"/>
<dbReference type="PDBsum" id="4HDB"/>
<dbReference type="PDBsum" id="4HDF"/>
<dbReference type="PDBsum" id="4HDP"/>
<dbReference type="PDBsum" id="4HE9"/>
<dbReference type="PDBsum" id="4HEG"/>
<dbReference type="PDBsum" id="4HLA"/>
<dbReference type="PDBsum" id="4J54"/>
<dbReference type="PDBsum" id="4J55"/>
<dbReference type="PDBsum" id="4J5J"/>
<dbReference type="PDBsum" id="4JEC"/>
<dbReference type="PDBsum" id="4LL3"/>
<dbReference type="PDBsum" id="5E5K"/>
<dbReference type="PDBsum" id="5YOK"/>
<dbReference type="PDBsum" id="6BSH"/>
<dbReference type="PDBsum" id="6P9A"/>
<dbReference type="PDBsum" id="6P9B"/>
<dbReference type="PDBsum" id="6UWB"/>
<dbReference type="PDBsum" id="6UWC"/>
<dbReference type="PDBsum" id="6VCE"/>
<dbReference type="PDBsum" id="6VLM"/>
<dbReference type="PDBsum" id="6VOD"/>
<dbReference type="PDBsum" id="6VOE"/>
<dbReference type="PDBsum" id="7DZM"/>
<dbReference type="PDBsum" id="7DZN"/>
<dbReference type="PDBsum" id="7M9G"/>
<dbReference type="PDBsum" id="7M9H"/>
<dbReference type="PDBsum" id="7M9I"/>
<dbReference type="PDBsum" id="7M9J"/>
<dbReference type="PDBsum" id="7M9K"/>
<dbReference type="PDBsum" id="7M9L"/>
<dbReference type="PDBsum" id="7M9M"/>
<dbReference type="PDBsum" id="7M9N"/>
<dbReference type="PDBsum" id="7M9O"/>
<dbReference type="PDBsum" id="7M9P"/>
<dbReference type="PDBsum" id="7M9Q"/>
<dbReference type="PDBsum" id="7M9R"/>
<dbReference type="PDBsum" id="7M9S"/>
<dbReference type="PDBsum" id="7M9T"/>
<dbReference type="PDBsum" id="7M9U"/>
<dbReference type="PDBsum" id="7M9V"/>
<dbReference type="PDBsum" id="7M9W"/>
<dbReference type="PDBsum" id="7M9X"/>
<dbReference type="PDBsum" id="7M9Z"/>
<dbReference type="PDBsum" id="7MA0"/>
<dbReference type="PDBsum" id="7MA1"/>
<dbReference type="PDBsum" id="7MA2"/>
<dbReference type="PDBsum" id="7MA3"/>
<dbReference type="PDBsum" id="7MA4"/>
<dbReference type="PDBsum" id="7MA5"/>
<dbReference type="PDBsum" id="7MA6"/>
<dbReference type="PDBsum" id="7MA7"/>
<dbReference type="PDBsum" id="7MA8"/>
<dbReference type="PDBsum" id="7MA9"/>
<dbReference type="PDBsum" id="7MAA"/>
<dbReference type="PDBsum" id="7MAB"/>
<dbReference type="PDBsum" id="7MAC"/>
<dbReference type="PDBsum" id="7MAD"/>
<dbReference type="PDBsum" id="7MAE"/>
<dbReference type="PDBsum" id="7MAF"/>
<dbReference type="PDBsum" id="7MAG"/>
<dbReference type="PDBsum" id="7MAH"/>
<dbReference type="PDBsum" id="7MAI"/>
<dbReference type="PDBsum" id="7MAJ"/>
<dbReference type="PDBsum" id="7MAK"/>
<dbReference type="PDBsum" id="7MAL"/>
<dbReference type="PDBsum" id="7MAN"/>
<dbReference type="PDBsum" id="7MAO"/>
<dbReference type="PDBsum" id="7MAP"/>
<dbReference type="PDBsum" id="7MAQ"/>
<dbReference type="PDBsum" id="7MAR"/>
<dbReference type="PDBsum" id="7MAS"/>
<dbReference type="PDBsum" id="7N6T"/>
<dbReference type="PDBsum" id="7N6V"/>
<dbReference type="PDBsum" id="7N6X"/>
<dbReference type="PDBsum" id="7TO5"/>
<dbReference type="PDBsum" id="7TO6"/>
<dbReference type="PDBsum" id="7UPJ"/>
<dbReference type="PDBsum" id="8DCH"/>
<dbReference type="PDBsum" id="8DCI"/>
<dbReference type="PDBsum" id="8FUI"/>
<dbReference type="PDBsum" id="8FUJ"/>
<dbReference type="PDBsum" id="8VB1"/>
<dbReference type="BMRB" id="P03367"/>
<dbReference type="SMR" id="P03367"/>
<dbReference type="IntAct" id="P03367">
    <property type="interactions" value="2"/>
</dbReference>
<dbReference type="MINT" id="P03367"/>
<dbReference type="BindingDB" id="P03367"/>
<dbReference type="ChEMBL" id="CHEMBL3638326"/>
<dbReference type="DrugBank" id="DB08428">
    <property type="generic name" value="3(S)-AMINO-4-PHENYL-BUTAN-2(S)-OL"/>
</dbReference>
<dbReference type="DrugBank" id="DB08662">
    <property type="generic name" value="3-[1-(4-BROMO-PHENYL)-2-METHYL-PROPYL]-4-HYDROXY-CHROMEN-2-ONE"/>
</dbReference>
<dbReference type="DrugBank" id="DB08041">
    <property type="generic name" value="3-BENZYLOXYCARBONYLAMINO-2-HYDROXY-4-PHENYL-BUTYRIC ACID"/>
</dbReference>
<dbReference type="DrugBank" id="DB07505">
    <property type="generic name" value="N-({(3R,4R)-4-[(benzyloxy)methyl]pyrrolidin-3-yl}methyl)-N-(2-methylpropyl)benzenesulfonamide"/>
</dbReference>
<dbReference type="DrugBank" id="DB07327">
    <property type="generic name" value="R-95845"/>
</dbReference>
<dbReference type="DrugCentral" id="P03367"/>
<dbReference type="ABCD" id="P03367">
    <property type="antibodies" value="1 sequenced antibody"/>
</dbReference>
<dbReference type="EvolutionaryTrace" id="P03367"/>
<dbReference type="PRO" id="PR:P03367"/>
<dbReference type="Proteomes" id="UP000007692">
    <property type="component" value="Genome"/>
</dbReference>
<dbReference type="GO" id="GO:0043657">
    <property type="term" value="C:host cell"/>
    <property type="evidence" value="ECO:0007669"/>
    <property type="project" value="GOC"/>
</dbReference>
<dbReference type="GO" id="GO:0042025">
    <property type="term" value="C:host cell nucleus"/>
    <property type="evidence" value="ECO:0007669"/>
    <property type="project" value="UniProtKB-SubCell"/>
</dbReference>
<dbReference type="GO" id="GO:0020002">
    <property type="term" value="C:host cell plasma membrane"/>
    <property type="evidence" value="ECO:0007669"/>
    <property type="project" value="UniProtKB-SubCell"/>
</dbReference>
<dbReference type="GO" id="GO:0072494">
    <property type="term" value="C:host multivesicular body"/>
    <property type="evidence" value="ECO:0007669"/>
    <property type="project" value="UniProtKB-SubCell"/>
</dbReference>
<dbReference type="GO" id="GO:0016020">
    <property type="term" value="C:membrane"/>
    <property type="evidence" value="ECO:0007669"/>
    <property type="project" value="UniProtKB-KW"/>
</dbReference>
<dbReference type="GO" id="GO:0019013">
    <property type="term" value="C:viral nucleocapsid"/>
    <property type="evidence" value="ECO:0007669"/>
    <property type="project" value="UniProtKB-KW"/>
</dbReference>
<dbReference type="GO" id="GO:0055036">
    <property type="term" value="C:virion membrane"/>
    <property type="evidence" value="ECO:0007669"/>
    <property type="project" value="UniProtKB-SubCell"/>
</dbReference>
<dbReference type="GO" id="GO:0004190">
    <property type="term" value="F:aspartic-type endopeptidase activity"/>
    <property type="evidence" value="ECO:0007669"/>
    <property type="project" value="UniProtKB-KW"/>
</dbReference>
<dbReference type="GO" id="GO:0003677">
    <property type="term" value="F:DNA binding"/>
    <property type="evidence" value="ECO:0007669"/>
    <property type="project" value="UniProtKB-KW"/>
</dbReference>
<dbReference type="GO" id="GO:0003887">
    <property type="term" value="F:DNA-directed DNA polymerase activity"/>
    <property type="evidence" value="ECO:0007669"/>
    <property type="project" value="UniProtKB-KW"/>
</dbReference>
<dbReference type="GO" id="GO:0004533">
    <property type="term" value="F:exoribonuclease H activity"/>
    <property type="evidence" value="ECO:0007669"/>
    <property type="project" value="UniProtKB-EC"/>
</dbReference>
<dbReference type="GO" id="GO:0008289">
    <property type="term" value="F:lipid binding"/>
    <property type="evidence" value="ECO:0007669"/>
    <property type="project" value="UniProtKB-KW"/>
</dbReference>
<dbReference type="GO" id="GO:0035613">
    <property type="term" value="F:RNA stem-loop binding"/>
    <property type="evidence" value="ECO:0007669"/>
    <property type="project" value="TreeGrafter"/>
</dbReference>
<dbReference type="GO" id="GO:0003964">
    <property type="term" value="F:RNA-directed DNA polymerase activity"/>
    <property type="evidence" value="ECO:0007669"/>
    <property type="project" value="UniProtKB-KW"/>
</dbReference>
<dbReference type="GO" id="GO:0004523">
    <property type="term" value="F:RNA-DNA hybrid ribonuclease activity"/>
    <property type="evidence" value="ECO:0007669"/>
    <property type="project" value="InterPro"/>
</dbReference>
<dbReference type="GO" id="GO:0005198">
    <property type="term" value="F:structural molecule activity"/>
    <property type="evidence" value="ECO:0007669"/>
    <property type="project" value="InterPro"/>
</dbReference>
<dbReference type="GO" id="GO:0008270">
    <property type="term" value="F:zinc ion binding"/>
    <property type="evidence" value="ECO:0007669"/>
    <property type="project" value="UniProtKB-KW"/>
</dbReference>
<dbReference type="GO" id="GO:0015074">
    <property type="term" value="P:DNA integration"/>
    <property type="evidence" value="ECO:0007669"/>
    <property type="project" value="UniProtKB-KW"/>
</dbReference>
<dbReference type="GO" id="GO:0006310">
    <property type="term" value="P:DNA recombination"/>
    <property type="evidence" value="ECO:0007669"/>
    <property type="project" value="UniProtKB-KW"/>
</dbReference>
<dbReference type="GO" id="GO:0075713">
    <property type="term" value="P:establishment of integrated proviral latency"/>
    <property type="evidence" value="ECO:0007669"/>
    <property type="project" value="UniProtKB-KW"/>
</dbReference>
<dbReference type="GO" id="GO:0006508">
    <property type="term" value="P:proteolysis"/>
    <property type="evidence" value="ECO:0007669"/>
    <property type="project" value="UniProtKB-KW"/>
</dbReference>
<dbReference type="GO" id="GO:0046718">
    <property type="term" value="P:symbiont entry into host cell"/>
    <property type="evidence" value="ECO:0007669"/>
    <property type="project" value="UniProtKB-KW"/>
</dbReference>
<dbReference type="GO" id="GO:0052151">
    <property type="term" value="P:symbiont-mediated activation of host apoptosis"/>
    <property type="evidence" value="ECO:0007669"/>
    <property type="project" value="UniProtKB-KW"/>
</dbReference>
<dbReference type="GO" id="GO:0039657">
    <property type="term" value="P:symbiont-mediated suppression of host gene expression"/>
    <property type="evidence" value="ECO:0007669"/>
    <property type="project" value="UniProtKB-KW"/>
</dbReference>
<dbReference type="GO" id="GO:0044826">
    <property type="term" value="P:viral genome integration into host DNA"/>
    <property type="evidence" value="ECO:0007669"/>
    <property type="project" value="UniProtKB-KW"/>
</dbReference>
<dbReference type="GO" id="GO:0075732">
    <property type="term" value="P:viral penetration into host nucleus"/>
    <property type="evidence" value="ECO:0007669"/>
    <property type="project" value="UniProtKB-KW"/>
</dbReference>
<dbReference type="GO" id="GO:0075523">
    <property type="term" value="P:viral translational frameshifting"/>
    <property type="evidence" value="ECO:0007669"/>
    <property type="project" value="UniProtKB-KW"/>
</dbReference>
<dbReference type="CDD" id="cd05482">
    <property type="entry name" value="HIV_retropepsin_like"/>
    <property type="match status" value="1"/>
</dbReference>
<dbReference type="CDD" id="cd01645">
    <property type="entry name" value="RT_Rtv"/>
    <property type="match status" value="1"/>
</dbReference>
<dbReference type="FunFam" id="1.10.1200.30:FF:000001">
    <property type="entry name" value="Gag polyprotein"/>
    <property type="match status" value="1"/>
</dbReference>
<dbReference type="FunFam" id="1.10.150.90:FF:000001">
    <property type="entry name" value="Gag polyprotein"/>
    <property type="match status" value="1"/>
</dbReference>
<dbReference type="FunFam" id="1.10.375.10:FF:000001">
    <property type="entry name" value="Gag polyprotein"/>
    <property type="match status" value="1"/>
</dbReference>
<dbReference type="FunFam" id="1.20.5.760:FF:000001">
    <property type="entry name" value="Gag polyprotein"/>
    <property type="match status" value="1"/>
</dbReference>
<dbReference type="FunFam" id="4.10.60.10:FF:000001">
    <property type="entry name" value="Gag polyprotein"/>
    <property type="match status" value="1"/>
</dbReference>
<dbReference type="FunFam" id="2.40.70.10:FF:000001">
    <property type="entry name" value="Gag-Pol polyprotein"/>
    <property type="match status" value="1"/>
</dbReference>
<dbReference type="FunFam" id="3.30.420.10:FF:000025">
    <property type="entry name" value="Gag-Pol polyprotein"/>
    <property type="match status" value="1"/>
</dbReference>
<dbReference type="FunFam" id="2.30.30.10:FF:000001">
    <property type="entry name" value="POL polyprotein"/>
    <property type="match status" value="1"/>
</dbReference>
<dbReference type="FunFam" id="3.30.420.10:FF:000017">
    <property type="entry name" value="POL polyprotein"/>
    <property type="match status" value="1"/>
</dbReference>
<dbReference type="FunFam" id="3.30.70.270:FF:000016">
    <property type="entry name" value="POL polyprotein"/>
    <property type="match status" value="1"/>
</dbReference>
<dbReference type="Gene3D" id="1.10.10.200">
    <property type="match status" value="1"/>
</dbReference>
<dbReference type="Gene3D" id="1.10.1200.30">
    <property type="match status" value="1"/>
</dbReference>
<dbReference type="Gene3D" id="3.30.70.270">
    <property type="match status" value="3"/>
</dbReference>
<dbReference type="Gene3D" id="2.40.70.10">
    <property type="entry name" value="Acid Proteases"/>
    <property type="match status" value="1"/>
</dbReference>
<dbReference type="Gene3D" id="3.10.10.10">
    <property type="entry name" value="HIV Type 1 Reverse Transcriptase, subunit A, domain 1"/>
    <property type="match status" value="1"/>
</dbReference>
<dbReference type="Gene3D" id="1.10.375.10">
    <property type="entry name" value="Human Immunodeficiency Virus Type 1 Capsid Protein"/>
    <property type="match status" value="1"/>
</dbReference>
<dbReference type="Gene3D" id="1.10.150.90">
    <property type="entry name" value="Immunodeficiency lentiviruses, gag gene matrix protein p17"/>
    <property type="match status" value="1"/>
</dbReference>
<dbReference type="Gene3D" id="2.30.30.10">
    <property type="entry name" value="Integrase, C-terminal domain superfamily, retroviral"/>
    <property type="match status" value="1"/>
</dbReference>
<dbReference type="Gene3D" id="3.30.420.10">
    <property type="entry name" value="Ribonuclease H-like superfamily/Ribonuclease H"/>
    <property type="match status" value="2"/>
</dbReference>
<dbReference type="Gene3D" id="1.20.5.760">
    <property type="entry name" value="Single helix bin"/>
    <property type="match status" value="1"/>
</dbReference>
<dbReference type="Gene3D" id="4.10.60.10">
    <property type="entry name" value="Zinc finger, CCHC-type"/>
    <property type="match status" value="1"/>
</dbReference>
<dbReference type="InterPro" id="IPR001969">
    <property type="entry name" value="Aspartic_peptidase_AS"/>
</dbReference>
<dbReference type="InterPro" id="IPR043502">
    <property type="entry name" value="DNA/RNA_pol_sf"/>
</dbReference>
<dbReference type="InterPro" id="IPR045345">
    <property type="entry name" value="Gag_p24_C"/>
</dbReference>
<dbReference type="InterPro" id="IPR017856">
    <property type="entry name" value="Integrase-like_N"/>
</dbReference>
<dbReference type="InterPro" id="IPR036862">
    <property type="entry name" value="Integrase_C_dom_sf_retrovir"/>
</dbReference>
<dbReference type="InterPro" id="IPR001037">
    <property type="entry name" value="Integrase_C_retrovir"/>
</dbReference>
<dbReference type="InterPro" id="IPR001584">
    <property type="entry name" value="Integrase_cat-core"/>
</dbReference>
<dbReference type="InterPro" id="IPR003308">
    <property type="entry name" value="Integrase_Zn-bd_dom_N"/>
</dbReference>
<dbReference type="InterPro" id="IPR000071">
    <property type="entry name" value="Lentvrl_matrix_N"/>
</dbReference>
<dbReference type="InterPro" id="IPR012344">
    <property type="entry name" value="Matrix_HIV/RSV_N"/>
</dbReference>
<dbReference type="InterPro" id="IPR001995">
    <property type="entry name" value="Peptidase_A2_cat"/>
</dbReference>
<dbReference type="InterPro" id="IPR021109">
    <property type="entry name" value="Peptidase_aspartic_dom_sf"/>
</dbReference>
<dbReference type="InterPro" id="IPR034170">
    <property type="entry name" value="Retropepsin-like_cat_dom"/>
</dbReference>
<dbReference type="InterPro" id="IPR018061">
    <property type="entry name" value="Retropepsins"/>
</dbReference>
<dbReference type="InterPro" id="IPR008916">
    <property type="entry name" value="Retrov_capsid_C"/>
</dbReference>
<dbReference type="InterPro" id="IPR008919">
    <property type="entry name" value="Retrov_capsid_N"/>
</dbReference>
<dbReference type="InterPro" id="IPR010999">
    <property type="entry name" value="Retrovr_matrix"/>
</dbReference>
<dbReference type="InterPro" id="IPR043128">
    <property type="entry name" value="Rev_trsase/Diguanyl_cyclase"/>
</dbReference>
<dbReference type="InterPro" id="IPR012337">
    <property type="entry name" value="RNaseH-like_sf"/>
</dbReference>
<dbReference type="InterPro" id="IPR002156">
    <property type="entry name" value="RNaseH_domain"/>
</dbReference>
<dbReference type="InterPro" id="IPR036397">
    <property type="entry name" value="RNaseH_sf"/>
</dbReference>
<dbReference type="InterPro" id="IPR000477">
    <property type="entry name" value="RT_dom"/>
</dbReference>
<dbReference type="InterPro" id="IPR010659">
    <property type="entry name" value="RVT_connect"/>
</dbReference>
<dbReference type="InterPro" id="IPR010661">
    <property type="entry name" value="RVT_thumb"/>
</dbReference>
<dbReference type="InterPro" id="IPR001878">
    <property type="entry name" value="Znf_CCHC"/>
</dbReference>
<dbReference type="InterPro" id="IPR036875">
    <property type="entry name" value="Znf_CCHC_sf"/>
</dbReference>
<dbReference type="PANTHER" id="PTHR41694">
    <property type="entry name" value="ENDOGENOUS RETROVIRUS GROUP K MEMBER POL PROTEIN"/>
    <property type="match status" value="1"/>
</dbReference>
<dbReference type="PANTHER" id="PTHR41694:SF3">
    <property type="entry name" value="RNA-DIRECTED DNA POLYMERASE-RELATED"/>
    <property type="match status" value="1"/>
</dbReference>
<dbReference type="Pfam" id="PF00540">
    <property type="entry name" value="Gag_p17"/>
    <property type="match status" value="1"/>
</dbReference>
<dbReference type="Pfam" id="PF19317">
    <property type="entry name" value="Gag_p24_C"/>
    <property type="match status" value="1"/>
</dbReference>
<dbReference type="Pfam" id="PF00552">
    <property type="entry name" value="IN_DBD_C"/>
    <property type="match status" value="1"/>
</dbReference>
<dbReference type="Pfam" id="PF02022">
    <property type="entry name" value="Integrase_Zn"/>
    <property type="match status" value="1"/>
</dbReference>
<dbReference type="Pfam" id="PF00075">
    <property type="entry name" value="RNase_H"/>
    <property type="match status" value="1"/>
</dbReference>
<dbReference type="Pfam" id="PF00665">
    <property type="entry name" value="rve"/>
    <property type="match status" value="1"/>
</dbReference>
<dbReference type="Pfam" id="PF00077">
    <property type="entry name" value="RVP"/>
    <property type="match status" value="1"/>
</dbReference>
<dbReference type="Pfam" id="PF00078">
    <property type="entry name" value="RVT_1"/>
    <property type="match status" value="1"/>
</dbReference>
<dbReference type="Pfam" id="PF06815">
    <property type="entry name" value="RVT_connect"/>
    <property type="match status" value="1"/>
</dbReference>
<dbReference type="Pfam" id="PF06817">
    <property type="entry name" value="RVT_thumb"/>
    <property type="match status" value="1"/>
</dbReference>
<dbReference type="Pfam" id="PF00098">
    <property type="entry name" value="zf-CCHC"/>
    <property type="match status" value="2"/>
</dbReference>
<dbReference type="PRINTS" id="PR00234">
    <property type="entry name" value="HIV1MATRIX"/>
</dbReference>
<dbReference type="SMART" id="SM00343">
    <property type="entry name" value="ZnF_C2HC"/>
    <property type="match status" value="2"/>
</dbReference>
<dbReference type="SUPFAM" id="SSF50630">
    <property type="entry name" value="Acid proteases"/>
    <property type="match status" value="1"/>
</dbReference>
<dbReference type="SUPFAM" id="SSF50122">
    <property type="entry name" value="DNA-binding domain of retroviral integrase"/>
    <property type="match status" value="1"/>
</dbReference>
<dbReference type="SUPFAM" id="SSF56672">
    <property type="entry name" value="DNA/RNA polymerases"/>
    <property type="match status" value="1"/>
</dbReference>
<dbReference type="SUPFAM" id="SSF46919">
    <property type="entry name" value="N-terminal Zn binding domain of HIV integrase"/>
    <property type="match status" value="1"/>
</dbReference>
<dbReference type="SUPFAM" id="SSF47836">
    <property type="entry name" value="Retroviral matrix proteins"/>
    <property type="match status" value="1"/>
</dbReference>
<dbReference type="SUPFAM" id="SSF47353">
    <property type="entry name" value="Retrovirus capsid dimerization domain-like"/>
    <property type="match status" value="1"/>
</dbReference>
<dbReference type="SUPFAM" id="SSF47943">
    <property type="entry name" value="Retrovirus capsid protein, N-terminal core domain"/>
    <property type="match status" value="1"/>
</dbReference>
<dbReference type="SUPFAM" id="SSF57756">
    <property type="entry name" value="Retrovirus zinc finger-like domains"/>
    <property type="match status" value="1"/>
</dbReference>
<dbReference type="SUPFAM" id="SSF53098">
    <property type="entry name" value="Ribonuclease H-like"/>
    <property type="match status" value="2"/>
</dbReference>
<dbReference type="PROSITE" id="PS50175">
    <property type="entry name" value="ASP_PROT_RETROV"/>
    <property type="match status" value="1"/>
</dbReference>
<dbReference type="PROSITE" id="PS00141">
    <property type="entry name" value="ASP_PROTEASE"/>
    <property type="match status" value="1"/>
</dbReference>
<dbReference type="PROSITE" id="PS50994">
    <property type="entry name" value="INTEGRASE"/>
    <property type="match status" value="1"/>
</dbReference>
<dbReference type="PROSITE" id="PS51027">
    <property type="entry name" value="INTEGRASE_DBD"/>
    <property type="match status" value="1"/>
</dbReference>
<dbReference type="PROSITE" id="PS50879">
    <property type="entry name" value="RNASE_H_1"/>
    <property type="match status" value="1"/>
</dbReference>
<dbReference type="PROSITE" id="PS50878">
    <property type="entry name" value="RT_POL"/>
    <property type="match status" value="1"/>
</dbReference>
<dbReference type="PROSITE" id="PS50158">
    <property type="entry name" value="ZF_CCHC"/>
    <property type="match status" value="2"/>
</dbReference>
<dbReference type="PROSITE" id="PS50876">
    <property type="entry name" value="ZF_INTEGRASE"/>
    <property type="match status" value="1"/>
</dbReference>
<organismHost>
    <name type="scientific">Homo sapiens</name>
    <name type="common">Human</name>
    <dbReference type="NCBI Taxonomy" id="9606"/>
</organismHost>
<name>POL_HV1BR</name>
<proteinExistence type="evidence at protein level"/>
<evidence type="ECO:0000250" key="1"/>
<evidence type="ECO:0000250" key="2">
    <source>
        <dbReference type="UniProtKB" id="P03347"/>
    </source>
</evidence>
<evidence type="ECO:0000250" key="3">
    <source>
        <dbReference type="UniProtKB" id="P03366"/>
    </source>
</evidence>
<evidence type="ECO:0000250" key="4">
    <source>
        <dbReference type="UniProtKB" id="P04585"/>
    </source>
</evidence>
<evidence type="ECO:0000250" key="5">
    <source>
        <dbReference type="UniProtKB" id="P12493"/>
    </source>
</evidence>
<evidence type="ECO:0000250" key="6">
    <source>
        <dbReference type="UniProtKB" id="P12497"/>
    </source>
</evidence>
<evidence type="ECO:0000255" key="7"/>
<evidence type="ECO:0000255" key="8">
    <source>
        <dbReference type="PROSITE-ProRule" id="PRU00047"/>
    </source>
</evidence>
<evidence type="ECO:0000255" key="9">
    <source>
        <dbReference type="PROSITE-ProRule" id="PRU00275"/>
    </source>
</evidence>
<evidence type="ECO:0000255" key="10">
    <source>
        <dbReference type="PROSITE-ProRule" id="PRU00405"/>
    </source>
</evidence>
<evidence type="ECO:0000255" key="11">
    <source>
        <dbReference type="PROSITE-ProRule" id="PRU00408"/>
    </source>
</evidence>
<evidence type="ECO:0000255" key="12">
    <source>
        <dbReference type="PROSITE-ProRule" id="PRU00450"/>
    </source>
</evidence>
<evidence type="ECO:0000255" key="13">
    <source>
        <dbReference type="PROSITE-ProRule" id="PRU00457"/>
    </source>
</evidence>
<evidence type="ECO:0000255" key="14">
    <source>
        <dbReference type="PROSITE-ProRule" id="PRU00506"/>
    </source>
</evidence>
<evidence type="ECO:0000255" key="15">
    <source>
        <dbReference type="PROSITE-ProRule" id="PRU10094"/>
    </source>
</evidence>
<evidence type="ECO:0000256" key="16">
    <source>
        <dbReference type="SAM" id="MobiDB-lite"/>
    </source>
</evidence>
<evidence type="ECO:0000269" key="17">
    <source>
    </source>
</evidence>
<evidence type="ECO:0000305" key="18"/>
<evidence type="ECO:0007829" key="19">
    <source>
        <dbReference type="PDB" id="1A8G"/>
    </source>
</evidence>
<evidence type="ECO:0007829" key="20">
    <source>
        <dbReference type="PDB" id="1HNI"/>
    </source>
</evidence>
<evidence type="ECO:0007829" key="21">
    <source>
        <dbReference type="PDB" id="1NH0"/>
    </source>
</evidence>
<evidence type="ECO:0007829" key="22">
    <source>
        <dbReference type="PDB" id="2HND"/>
    </source>
</evidence>
<evidence type="ECO:0007829" key="23">
    <source>
        <dbReference type="PDB" id="2HNY"/>
    </source>
</evidence>
<evidence type="ECO:0007829" key="24">
    <source>
        <dbReference type="PDB" id="3NDX"/>
    </source>
</evidence>
<evidence type="ECO:0007829" key="25">
    <source>
        <dbReference type="PDB" id="5YOK"/>
    </source>
</evidence>
<evidence type="ECO:0007829" key="26">
    <source>
        <dbReference type="PDB" id="6VLM"/>
    </source>
</evidence>
<organism>
    <name type="scientific">Human immunodeficiency virus type 1 group M subtype B (isolate BRU/LAI)</name>
    <name type="common">HIV-1</name>
    <dbReference type="NCBI Taxonomy" id="11686"/>
    <lineage>
        <taxon>Viruses</taxon>
        <taxon>Riboviria</taxon>
        <taxon>Pararnavirae</taxon>
        <taxon>Artverviricota</taxon>
        <taxon>Revtraviricetes</taxon>
        <taxon>Ortervirales</taxon>
        <taxon>Retroviridae</taxon>
        <taxon>Orthoretrovirinae</taxon>
        <taxon>Lentivirus</taxon>
        <taxon>Human immunodeficiency virus type 1</taxon>
    </lineage>
</organism>
<feature type="initiator methionine" description="Removed; by host" evidence="1">
    <location>
        <position position="1"/>
    </location>
</feature>
<feature type="chain" id="PRO_0000261264" description="Gag-Pol polyprotein">
    <location>
        <begin position="2"/>
        <end position="1447"/>
    </location>
</feature>
<feature type="chain" id="PRO_0000042330" description="Matrix protein p17" evidence="1">
    <location>
        <begin position="2"/>
        <end position="132"/>
    </location>
</feature>
<feature type="chain" id="PRO_0000042331" description="Capsid protein p24" evidence="1">
    <location>
        <begin position="133"/>
        <end position="363"/>
    </location>
</feature>
<feature type="peptide" id="PRO_0000042332" description="Spacer peptide 1" evidence="1">
    <location>
        <begin position="364"/>
        <end position="377"/>
    </location>
</feature>
<feature type="chain" id="PRO_0000042333" description="Nucleocapsid protein p7" evidence="1">
    <location>
        <begin position="378"/>
        <end position="432"/>
    </location>
</feature>
<feature type="peptide" id="PRO_0000246712" description="Transframe peptide" evidence="7">
    <location>
        <begin position="433"/>
        <end position="440"/>
    </location>
</feature>
<feature type="chain" id="PRO_0000042334" description="p6-pol" evidence="7">
    <location>
        <begin position="441"/>
        <end position="500"/>
    </location>
</feature>
<feature type="chain" id="PRO_0000038652" description="Protease" evidence="1">
    <location>
        <begin position="501"/>
        <end position="599"/>
    </location>
</feature>
<feature type="chain" id="PRO_0000042335" description="Reverse transcriptase/ribonuclease H" evidence="1">
    <location>
        <begin position="600"/>
        <end position="1159"/>
    </location>
</feature>
<feature type="chain" id="PRO_0000042336" description="p51 RT" evidence="1">
    <location>
        <begin position="600"/>
        <end position="1039"/>
    </location>
</feature>
<feature type="chain" id="PRO_0000042337" description="p15" evidence="1">
    <location>
        <begin position="1040"/>
        <end position="1159"/>
    </location>
</feature>
<feature type="chain" id="PRO_0000042338" description="Integrase" evidence="1">
    <location>
        <begin position="1160"/>
        <end position="1447"/>
    </location>
</feature>
<feature type="domain" description="Peptidase A2" evidence="9">
    <location>
        <begin position="520"/>
        <end position="589"/>
    </location>
</feature>
<feature type="domain" description="Reverse transcriptase" evidence="10">
    <location>
        <begin position="643"/>
        <end position="833"/>
    </location>
</feature>
<feature type="domain" description="RNase H type-1" evidence="11">
    <location>
        <begin position="1033"/>
        <end position="1156"/>
    </location>
</feature>
<feature type="domain" description="Integrase catalytic" evidence="13">
    <location>
        <begin position="1213"/>
        <end position="1363"/>
    </location>
</feature>
<feature type="zinc finger region" description="CCHC-type 1" evidence="8">
    <location>
        <begin position="390"/>
        <end position="407"/>
    </location>
</feature>
<feature type="zinc finger region" description="CCHC-type 2" evidence="8">
    <location>
        <begin position="411"/>
        <end position="428"/>
    </location>
</feature>
<feature type="zinc finger region" description="Integrase-type" evidence="12">
    <location>
        <begin position="1162"/>
        <end position="1203"/>
    </location>
</feature>
<feature type="DNA-binding region" description="Integrase-type" evidence="14">
    <location>
        <begin position="1382"/>
        <end position="1429"/>
    </location>
</feature>
<feature type="region of interest" description="Interaction with Gp41" evidence="6">
    <location>
        <begin position="7"/>
        <end position="31"/>
    </location>
</feature>
<feature type="region of interest" description="Interaction with host CALM1" evidence="4">
    <location>
        <begin position="8"/>
        <end position="43"/>
    </location>
</feature>
<feature type="region of interest" description="Interaction with host AP3D1" evidence="6">
    <location>
        <begin position="12"/>
        <end position="19"/>
    </location>
</feature>
<feature type="region of interest" description="Interaction with membrane phosphatidylinositol 4,5-bisphosphate and RNA" evidence="6">
    <location>
        <begin position="14"/>
        <end position="33"/>
    </location>
</feature>
<feature type="region of interest" description="Interaction with membrane phosphatidylinositol 4,5-bisphosphate" evidence="6">
    <location>
        <begin position="73"/>
        <end position="77"/>
    </location>
</feature>
<feature type="region of interest" description="Disordered" evidence="16">
    <location>
        <begin position="106"/>
        <end position="128"/>
    </location>
</feature>
<feature type="region of interest" description="Interaction with human PPIA/CYPA and NUP153" evidence="6">
    <location>
        <begin position="189"/>
        <end position="227"/>
    </location>
</feature>
<feature type="region of interest" description="Dimerization/Multimerization of capsid protein p24" evidence="4">
    <location>
        <begin position="277"/>
        <end position="363"/>
    </location>
</feature>
<feature type="region of interest" description="Disordered" evidence="16">
    <location>
        <begin position="447"/>
        <end position="476"/>
    </location>
</feature>
<feature type="region of interest" description="Dimerization of protease" evidence="4">
    <location>
        <begin position="501"/>
        <end position="505"/>
    </location>
</feature>
<feature type="region of interest" description="Dimerization of protease" evidence="4">
    <location>
        <begin position="549"/>
        <end position="555"/>
    </location>
</feature>
<feature type="region of interest" description="Dimerization of protease" evidence="4">
    <location>
        <begin position="588"/>
        <end position="600"/>
    </location>
</feature>
<feature type="region of interest" description="RT 'primer grip'" evidence="1">
    <location>
        <begin position="826"/>
        <end position="834"/>
    </location>
</feature>
<feature type="short sequence motif" description="Nuclear export signal" evidence="1">
    <location>
        <begin position="16"/>
        <end position="22"/>
    </location>
</feature>
<feature type="short sequence motif" description="Nuclear localization signal" evidence="1">
    <location>
        <begin position="26"/>
        <end position="32"/>
    </location>
</feature>
<feature type="short sequence motif" description="Tryptophan repeat motif" evidence="1">
    <location>
        <begin position="997"/>
        <end position="1013"/>
    </location>
</feature>
<feature type="compositionally biased region" description="Polar residues" evidence="16">
    <location>
        <begin position="450"/>
        <end position="470"/>
    </location>
</feature>
<feature type="active site" description="For protease activity; shared with dimeric partner" evidence="15">
    <location>
        <position position="525"/>
    </location>
</feature>
<feature type="binding site" evidence="1">
    <location>
        <position position="709"/>
    </location>
    <ligand>
        <name>Mg(2+)</name>
        <dbReference type="ChEBI" id="CHEBI:18420"/>
        <label>1</label>
        <note>catalytic; for reverse transcriptase activity</note>
    </ligand>
</feature>
<feature type="binding site" evidence="1">
    <location>
        <position position="784"/>
    </location>
    <ligand>
        <name>Mg(2+)</name>
        <dbReference type="ChEBI" id="CHEBI:18420"/>
        <label>1</label>
        <note>catalytic; for reverse transcriptase activity</note>
    </ligand>
</feature>
<feature type="binding site" evidence="1">
    <location>
        <position position="785"/>
    </location>
    <ligand>
        <name>Mg(2+)</name>
        <dbReference type="ChEBI" id="CHEBI:18420"/>
        <label>1</label>
        <note>catalytic; for reverse transcriptase activity</note>
    </ligand>
</feature>
<feature type="binding site" evidence="1">
    <location>
        <position position="1042"/>
    </location>
    <ligand>
        <name>Mg(2+)</name>
        <dbReference type="ChEBI" id="CHEBI:18420"/>
        <label>2</label>
        <note>catalytic; for RNase H activity</note>
    </ligand>
</feature>
<feature type="binding site" evidence="1">
    <location>
        <position position="1077"/>
    </location>
    <ligand>
        <name>Mg(2+)</name>
        <dbReference type="ChEBI" id="CHEBI:18420"/>
        <label>2</label>
        <note>catalytic; for RNase H activity</note>
    </ligand>
</feature>
<feature type="binding site" evidence="1">
    <location>
        <position position="1097"/>
    </location>
    <ligand>
        <name>Mg(2+)</name>
        <dbReference type="ChEBI" id="CHEBI:18420"/>
        <label>2</label>
        <note>catalytic; for RNase H activity</note>
    </ligand>
</feature>
<feature type="binding site" evidence="1">
    <location>
        <position position="1148"/>
    </location>
    <ligand>
        <name>Mg(2+)</name>
        <dbReference type="ChEBI" id="CHEBI:18420"/>
        <label>2</label>
        <note>catalytic; for RNase H activity</note>
    </ligand>
</feature>
<feature type="binding site" evidence="12">
    <location>
        <position position="1171"/>
    </location>
    <ligand>
        <name>Zn(2+)</name>
        <dbReference type="ChEBI" id="CHEBI:29105"/>
    </ligand>
</feature>
<feature type="binding site" evidence="12">
    <location>
        <position position="1175"/>
    </location>
    <ligand>
        <name>Zn(2+)</name>
        <dbReference type="ChEBI" id="CHEBI:29105"/>
    </ligand>
</feature>
<feature type="binding site" evidence="12">
    <location>
        <position position="1199"/>
    </location>
    <ligand>
        <name>Zn(2+)</name>
        <dbReference type="ChEBI" id="CHEBI:29105"/>
    </ligand>
</feature>
<feature type="binding site" evidence="12">
    <location>
        <position position="1202"/>
    </location>
    <ligand>
        <name>Zn(2+)</name>
        <dbReference type="ChEBI" id="CHEBI:29105"/>
    </ligand>
</feature>
<feature type="binding site" evidence="1">
    <location>
        <position position="1223"/>
    </location>
    <ligand>
        <name>Mg(2+)</name>
        <dbReference type="ChEBI" id="CHEBI:18420"/>
        <label>3</label>
        <note>catalytic; for integrase activity</note>
    </ligand>
</feature>
<feature type="binding site" evidence="1">
    <location>
        <position position="1275"/>
    </location>
    <ligand>
        <name>Mg(2+)</name>
        <dbReference type="ChEBI" id="CHEBI:18420"/>
        <label>3</label>
        <note>catalytic; for integrase activity</note>
    </ligand>
</feature>
<feature type="binding site" evidence="4">
    <location>
        <position position="1311"/>
    </location>
    <ligand>
        <name>Mg(2+)</name>
        <dbReference type="ChEBI" id="CHEBI:18420"/>
        <label>3</label>
        <note>catalytic; for integrase activity</note>
    </ligand>
</feature>
<feature type="site" description="Cleavage; by viral protease" evidence="1">
    <location>
        <begin position="132"/>
        <end position="133"/>
    </location>
</feature>
<feature type="site" description="Cis/trans isomerization of proline peptide bond; by human PPIA/CYPA" evidence="1">
    <location>
        <begin position="221"/>
        <end position="222"/>
    </location>
</feature>
<feature type="site" description="Cleavage; by viral protease" evidence="1">
    <location>
        <begin position="363"/>
        <end position="364"/>
    </location>
</feature>
<feature type="site" description="Cleavage; by viral protease" evidence="1">
    <location>
        <begin position="377"/>
        <end position="378"/>
    </location>
</feature>
<feature type="site" description="Cleavage; by viral protease" evidence="7">
    <location>
        <begin position="432"/>
        <end position="433"/>
    </location>
</feature>
<feature type="site" description="Cleavage; by viral protease" evidence="1">
    <location>
        <begin position="440"/>
        <end position="441"/>
    </location>
</feature>
<feature type="site" description="Cleavage; by viral protease" evidence="1">
    <location>
        <begin position="500"/>
        <end position="501"/>
    </location>
</feature>
<feature type="site" description="Cleavage; by viral protease" evidence="1">
    <location>
        <begin position="599"/>
        <end position="600"/>
    </location>
</feature>
<feature type="site" description="Essential for RT p66/p51 heterodimerization" evidence="1">
    <location>
        <position position="1000"/>
    </location>
</feature>
<feature type="site" description="Essential for RT p66/p51 heterodimerization" evidence="1">
    <location>
        <position position="1013"/>
    </location>
</feature>
<feature type="site" description="Cleavage; by viral protease; partial" evidence="1">
    <location>
        <begin position="1039"/>
        <end position="1040"/>
    </location>
</feature>
<feature type="site" description="Cleavage; by viral protease" evidence="1">
    <location>
        <begin position="1159"/>
        <end position="1160"/>
    </location>
</feature>
<feature type="modified residue" description="Phosphotyrosine; by host" evidence="1">
    <location>
        <position position="132"/>
    </location>
</feature>
<feature type="lipid moiety-binding region" description="N-myristoyl glycine; by host" evidence="1">
    <location>
        <position position="2"/>
    </location>
</feature>
<feature type="strand" evidence="19">
    <location>
        <begin position="502"/>
        <end position="504"/>
    </location>
</feature>
<feature type="strand" evidence="25">
    <location>
        <begin position="505"/>
        <end position="507"/>
    </location>
</feature>
<feature type="strand" evidence="25">
    <location>
        <begin position="510"/>
        <end position="515"/>
    </location>
</feature>
<feature type="strand" evidence="25">
    <location>
        <begin position="518"/>
        <end position="524"/>
    </location>
</feature>
<feature type="strand" evidence="21">
    <location>
        <begin position="528"/>
        <end position="530"/>
    </location>
</feature>
<feature type="strand" evidence="25">
    <location>
        <begin position="532"/>
        <end position="535"/>
    </location>
</feature>
<feature type="strand" evidence="25">
    <location>
        <begin position="542"/>
        <end position="549"/>
    </location>
</feature>
<feature type="strand" evidence="25">
    <location>
        <begin position="552"/>
        <end position="566"/>
    </location>
</feature>
<feature type="strand" evidence="25">
    <location>
        <begin position="569"/>
        <end position="578"/>
    </location>
</feature>
<feature type="strand" evidence="24">
    <location>
        <begin position="581"/>
        <end position="585"/>
    </location>
</feature>
<feature type="helix" evidence="25">
    <location>
        <begin position="587"/>
        <end position="590"/>
    </location>
</feature>
<feature type="turn" evidence="25">
    <location>
        <begin position="591"/>
        <end position="594"/>
    </location>
</feature>
<feature type="strand" evidence="25">
    <location>
        <begin position="596"/>
        <end position="598"/>
    </location>
</feature>
<feature type="helix" evidence="22">
    <location>
        <begin position="627"/>
        <end position="642"/>
    </location>
</feature>
<feature type="strand" evidence="22">
    <location>
        <begin position="645"/>
        <end position="648"/>
    </location>
</feature>
<feature type="strand" evidence="22">
    <location>
        <begin position="659"/>
        <end position="663"/>
    </location>
</feature>
<feature type="strand" evidence="22">
    <location>
        <begin position="668"/>
        <end position="674"/>
    </location>
</feature>
<feature type="helix" evidence="22">
    <location>
        <begin position="677"/>
        <end position="682"/>
    </location>
</feature>
<feature type="turn" evidence="20">
    <location>
        <begin position="688"/>
        <end position="690"/>
    </location>
</feature>
<feature type="turn" evidence="22">
    <location>
        <begin position="697"/>
        <end position="701"/>
    </location>
</feature>
<feature type="strand" evidence="22">
    <location>
        <begin position="702"/>
        <end position="709"/>
    </location>
</feature>
<feature type="helix" evidence="22">
    <location>
        <begin position="711"/>
        <end position="716"/>
    </location>
</feature>
<feature type="helix" evidence="22">
    <location>
        <begin position="721"/>
        <end position="724"/>
    </location>
</feature>
<feature type="helix" evidence="22">
    <location>
        <begin position="725"/>
        <end position="727"/>
    </location>
</feature>
<feature type="strand" evidence="22">
    <location>
        <begin position="729"/>
        <end position="731"/>
    </location>
</feature>
<feature type="helix" evidence="22">
    <location>
        <begin position="734"/>
        <end position="736"/>
    </location>
</feature>
<feature type="strand" evidence="22">
    <location>
        <begin position="741"/>
        <end position="747"/>
    </location>
</feature>
<feature type="helix" evidence="22">
    <location>
        <begin position="754"/>
        <end position="758"/>
    </location>
</feature>
<feature type="helix" evidence="22">
    <location>
        <begin position="760"/>
        <end position="773"/>
    </location>
</feature>
<feature type="strand" evidence="22">
    <location>
        <begin position="777"/>
        <end position="782"/>
    </location>
</feature>
<feature type="strand" evidence="22">
    <location>
        <begin position="785"/>
        <end position="790"/>
    </location>
</feature>
<feature type="helix" evidence="22">
    <location>
        <begin position="794"/>
        <end position="809"/>
    </location>
</feature>
<feature type="helix" evidence="23">
    <location>
        <begin position="828"/>
        <end position="830"/>
    </location>
</feature>
<feature type="strand" evidence="20">
    <location>
        <begin position="831"/>
        <end position="833"/>
    </location>
</feature>
<feature type="turn" evidence="22">
    <location>
        <begin position="835"/>
        <end position="837"/>
    </location>
</feature>
<feature type="strand" evidence="22">
    <location>
        <begin position="849"/>
        <end position="852"/>
    </location>
</feature>
<feature type="helix" evidence="22">
    <location>
        <begin position="853"/>
        <end position="866"/>
    </location>
</feature>
<feature type="turn" evidence="22">
    <location>
        <begin position="867"/>
        <end position="869"/>
    </location>
</feature>
<feature type="helix" evidence="22">
    <location>
        <begin position="876"/>
        <end position="881"/>
    </location>
</feature>
<feature type="helix" evidence="22">
    <location>
        <begin position="896"/>
        <end position="909"/>
    </location>
</feature>
<feature type="strand" evidence="20">
    <location>
        <begin position="920"/>
        <end position="922"/>
    </location>
</feature>
<feature type="strand" evidence="22">
    <location>
        <begin position="925"/>
        <end position="932"/>
    </location>
</feature>
<feature type="strand" evidence="22">
    <location>
        <begin position="935"/>
        <end position="945"/>
    </location>
</feature>
<feature type="strand" evidence="22">
    <location>
        <begin position="947"/>
        <end position="954"/>
    </location>
</feature>
<feature type="helix" evidence="22">
    <location>
        <begin position="963"/>
        <end position="982"/>
    </location>
</feature>
<feature type="strand" evidence="22">
    <location>
        <begin position="987"/>
        <end position="992"/>
    </location>
</feature>
<feature type="helix" evidence="22">
    <location>
        <begin position="994"/>
        <end position="1000"/>
    </location>
</feature>
<feature type="helix" evidence="22">
    <location>
        <begin position="1001"/>
        <end position="1003"/>
    </location>
</feature>
<feature type="strand" evidence="22">
    <location>
        <begin position="1012"/>
        <end position="1015"/>
    </location>
</feature>
<feature type="helix" evidence="22">
    <location>
        <begin position="1020"/>
        <end position="1024"/>
    </location>
</feature>
<feature type="strand" evidence="26">
    <location>
        <begin position="1219"/>
        <end position="1227"/>
    </location>
</feature>
<feature type="strand" evidence="26">
    <location>
        <begin position="1230"/>
        <end position="1237"/>
    </location>
</feature>
<feature type="turn" evidence="26">
    <location>
        <begin position="1238"/>
        <end position="1240"/>
    </location>
</feature>
<feature type="strand" evidence="26">
    <location>
        <begin position="1243"/>
        <end position="1251"/>
    </location>
</feature>
<feature type="helix" evidence="26">
    <location>
        <begin position="1253"/>
        <end position="1266"/>
    </location>
</feature>
<feature type="strand" evidence="26">
    <location>
        <begin position="1271"/>
        <end position="1273"/>
    </location>
</feature>
<feature type="helix" evidence="26">
    <location>
        <begin position="1278"/>
        <end position="1281"/>
    </location>
</feature>
<feature type="helix" evidence="26">
    <location>
        <begin position="1283"/>
        <end position="1292"/>
    </location>
</feature>
<feature type="helix" evidence="26">
    <location>
        <begin position="1304"/>
        <end position="1324"/>
    </location>
</feature>
<feature type="helix" evidence="26">
    <location>
        <begin position="1325"/>
        <end position="1327"/>
    </location>
</feature>
<feature type="helix" evidence="26">
    <location>
        <begin position="1331"/>
        <end position="1344"/>
    </location>
</feature>
<feature type="helix" evidence="26">
    <location>
        <begin position="1355"/>
        <end position="1368"/>
    </location>
</feature>
<comment type="function">
    <text evidence="1">Gag-Pol polyprotein and Gag polyprotein may regulate their own translation, by the binding genomic RNA in the 5'-UTR. At low concentration, Gag-Pol and Gag would promote translation, whereas at high concentration, the polyproteins encapsidate genomic RNA and then shut off translation (By similarity).</text>
</comment>
<comment type="function">
    <text evidence="1 6">Matrix protein p17 targets Gag and Gag-pol polyproteins to the plasma membrane via a multipartite membrane-binding signal, that includes its myristoylated N-terminus (By similarity). Matrix protein is part of the pre-integration complex. Implicated in the release from host cell mediated by Vpu. Binds to RNA (By similarity).</text>
</comment>
<comment type="function">
    <molecule>Capsid protein p24</molecule>
    <text evidence="4 6">Forms the conical core that encapsulates the genomic RNA-nucleocapsid complex in the virion. Most core are conical, with only 7% tubular. The core is constituted by capsid protein hexamer subunits. The core is disassembled soon after virion entry (By similarity). Host restriction factors such as TRIM5-alpha or TRIMCyp bind retroviral capsids and cause premature capsid disassembly, leading to blocks in reverse transcription. Capsid restriction by TRIM5 is one of the factors which restricts HIV-1 to the human species. Host PIN1 apparently facilitates the virion uncoating. On the other hand, interactions with PDZD8 or CYPA stabilize the capsid.</text>
</comment>
<comment type="function">
    <text evidence="4">Nucleocapsid protein p7 encapsulates and protects viral dimeric unspliced genomic RNA (gRNA). Binds these RNAs through its zinc fingers. Acts as a nucleic acid chaperone which is involved in rearangement of nucleic acid secondary structure during gRNA retrotranscription. Also facilitates template switch leading to recombination. As part of the polyprotein, participates in gRNA dimerization, packaging, tRNA incorporation and virion assembly.</text>
</comment>
<comment type="function">
    <text evidence="9">The aspartyl protease mediates proteolytic cleavages of Gag and Gag-Pol polyproteins during or shortly after the release of the virion from the plasma membrane. Cleavages take place as an ordered, step-wise cascade to yield mature proteins. This process is called maturation. Displays maximal activity during the budding process just prior to particle release from the cell. Also cleaves Nef and Vif, probably concomitantly with viral structural proteins on maturation of virus particles. Hydrolyzes host EIF4GI and PABP1 in order to shut off the capped cellular mRNA translation. The resulting inhibition of cellular protein synthesis serves to ensure maximal viral gene expression and to evade host immune response. Also mediates cleavage of host YTHDF3. Mediates cleavage of host CARD8, thereby activating the CARD8 inflammasome, leading to the clearance of latent HIV-1 in patient CD4(+) T-cells after viral reactivation; in contrast, HIV-1 can evade CARD8-sensing when its protease remains inactive in infected cells prior to viral budding (By similarity).</text>
</comment>
<comment type="function">
    <text evidence="1">Reverse transcriptase/ribonuclease H (RT) is a multifunctional enzyme that converts the viral RNA genome into dsDNA in the cytoplasm, shortly after virus entry into the cell. This enzyme displays a DNA polymerase activity that can copy either DNA or RNA templates, and a ribonuclease H (RNase H) activity that cleaves the RNA strand of RNA-DNA heteroduplexes in a partially processive 3' to 5' endonucleasic mode. Conversion of viral genomic RNA into dsDNA requires many steps. A tRNA(3)-Lys binds to the primer-binding site (PBS) situated at the 5'-end of the viral RNA. RT uses the 3' end of the tRNA primer to perform a short round of RNA-dependent minus-strand DNA synthesis. The reading proceeds through the U5 region and ends after the repeated (R) region which is present at both ends of viral RNA. The portion of the RNA-DNA heteroduplex is digested by the RNase H, resulting in a ssDNA product attached to the tRNA primer. This ssDNA/tRNA hybridizes with the identical R region situated at the 3' end of viral RNA. This template exchange, known as minus-strand DNA strong stop transfer, can be either intra- or intermolecular. RT uses the 3' end of this newly synthesized short ssDNA to perform the RNA-dependent minus-strand DNA synthesis of the whole template. RNase H digests the RNA template except for two polypurine tracts (PPTs) situated at the 5'-end and near the center of the genome. It is not clear if both polymerase and RNase H activities are simultaneous. RNase H probably can proceed both in a polymerase-dependent (RNA cut into small fragments by the same RT performing DNA synthesis) and a polymerase-independent mode (cleavage of remaining RNA fragments by free RTs). Secondly, RT performs DNA-directed plus-strand DNA synthesis using the PPTs that have not been removed by RNase H as primers. PPTs and tRNA primers are then removed by RNase H. The 3' and 5' ssDNA PBS regions hybridize to form a circular dsDNA intermediate. Strand displacement synthesis by RT to the PBS and PPT ends produces a blunt ended, linear dsDNA copy of the viral genome that includes long terminal repeats (LTRs) at both ends (By similarity).</text>
</comment>
<comment type="function">
    <molecule>Integrase</molecule>
    <text evidence="4">Catalyzes viral DNA integration into the host chromosome, by performing a series of DNA cutting and joining reactions. This enzyme activity takes place after virion entry into a cell and reverse transcription of the RNA genome in dsDNA. The first step in the integration process is 3' processing. This step requires a complex comprising the viral genome, matrix protein, Vpr and integrase. This complex is called the pre-integration complex (PIC). The integrase protein removes 2 nucleotides from each 3' end of the viral DNA, leaving recessed CA OH's at the 3' ends. In the second step, the PIC enters cell nucleus. This process is mediated through integrase and Vpr proteins, and allows the virus to infect a non dividing cell. This ability to enter the nucleus is specific of lentiviruses, other retroviruses cannot and rely on cell division to access cell chromosomes. In the third step, termed strand transfer, the integrase protein joins the previously processed 3' ends to the 5' ends of strands of target cellular DNA at the site of integration. The 5'-ends are produced by integrase-catalyzed staggered cuts, 5 bp apart. A Y-shaped, gapped, recombination intermediate results, with the 5'-ends of the viral DNA strands and the 3' ends of target DNA strands remaining unjoined, flanking a gap of 5 bp. The last step is viral DNA integration into host chromosome. This involves host DNA repair synthesis in which the 5 bp gaps between the unjoined strands are filled in and then ligated. Since this process occurs at both cuts flanking the HIV genome, a 5 bp duplication of host DNA is produced at the ends of HIV-1 integration. Alternatively, Integrase may catalyze the excision of viral DNA just after strand transfer, this is termed disintegration.</text>
</comment>
<comment type="catalytic activity">
    <reaction evidence="9">
        <text>Specific for a P1 residue that is hydrophobic, and P1' variable, but often Pro.</text>
        <dbReference type="EC" id="3.4.23.16"/>
    </reaction>
</comment>
<comment type="catalytic activity">
    <reaction>
        <text>Endohydrolysis of RNA in RNA/DNA hybrids. Three different cleavage modes: 1. sequence-specific internal cleavage of RNA. Human immunodeficiency virus type 1 and Moloney murine leukemia virus enzymes prefer to cleave the RNA strand one nucleotide away from the RNA-DNA junction. 2. RNA 5'-end directed cleavage 13-19 nucleotides from the RNA end. 3. DNA 3'-end directed cleavage 15-20 nucleotides away from the primer terminus.</text>
        <dbReference type="EC" id="3.1.26.13"/>
    </reaction>
</comment>
<comment type="catalytic activity">
    <reaction>
        <text>3'-end directed exonucleolytic cleavage of viral RNA-DNA hybrid.</text>
        <dbReference type="EC" id="3.1.13.2"/>
    </reaction>
</comment>
<comment type="catalytic activity">
    <reaction evidence="10">
        <text>DNA(n) + a 2'-deoxyribonucleoside 5'-triphosphate = DNA(n+1) + diphosphate</text>
        <dbReference type="Rhea" id="RHEA:22508"/>
        <dbReference type="Rhea" id="RHEA-COMP:17339"/>
        <dbReference type="Rhea" id="RHEA-COMP:17340"/>
        <dbReference type="ChEBI" id="CHEBI:33019"/>
        <dbReference type="ChEBI" id="CHEBI:61560"/>
        <dbReference type="ChEBI" id="CHEBI:173112"/>
        <dbReference type="EC" id="2.7.7.49"/>
    </reaction>
</comment>
<comment type="catalytic activity">
    <reaction evidence="10">
        <text>DNA(n) + a 2'-deoxyribonucleoside 5'-triphosphate = DNA(n+1) + diphosphate</text>
        <dbReference type="Rhea" id="RHEA:22508"/>
        <dbReference type="Rhea" id="RHEA-COMP:17339"/>
        <dbReference type="Rhea" id="RHEA-COMP:17340"/>
        <dbReference type="ChEBI" id="CHEBI:33019"/>
        <dbReference type="ChEBI" id="CHEBI:61560"/>
        <dbReference type="ChEBI" id="CHEBI:173112"/>
        <dbReference type="EC" id="2.7.7.7"/>
    </reaction>
</comment>
<comment type="cofactor">
    <cofactor evidence="1">
        <name>Mg(2+)</name>
        <dbReference type="ChEBI" id="CHEBI:18420"/>
    </cofactor>
    <text evidence="1">Binds 2 magnesium ions for reverse transcriptase polymerase activity.</text>
</comment>
<comment type="cofactor">
    <cofactor evidence="1">
        <name>Mg(2+)</name>
        <dbReference type="ChEBI" id="CHEBI:18420"/>
    </cofactor>
    <text evidence="1">Binds 2 magnesium ions for ribonuclease H (RNase H) activity. Substrate-binding is a precondition for magnesium binding.</text>
</comment>
<comment type="cofactor">
    <cofactor evidence="1">
        <name>Mg(2+)</name>
        <dbReference type="ChEBI" id="CHEBI:18420"/>
    </cofactor>
    <text evidence="1">Magnesium ions are required for integrase activity. Binds at least 1, maybe 2 magnesium ions.</text>
</comment>
<comment type="activity regulation">
    <text evidence="1">The viral protease is inhibited by many synthetic protease inhibitors (PIs), such as amprenavir, atazanavir, indinavir, loprinavir, nelfinavir, ritonavir and saquinavir. RT can be inhibited either by nucleoside RT inhibitors (NRTIs) or by non nucleoside RT inhibitors (NNRTIs). NRTIs act as chain terminators, whereas NNRTIs inhibit DNA polymerization by binding a small hydrophobic pocket near the RT active site and inducing an allosteric change in this region. Classical NRTIs are abacavir, adefovir (PMEA), didanosine (ddI), lamivudine (3TC), stavudine (d4T), tenofovir (PMPA), zalcitabine (ddC), and zidovudine (AZT). Classical NNRTIs are atevirdine (BHAP U-87201E), delavirdine, efavirenz (DMP-266), emivirine (I-EBU), and nevirapine (BI-RG-587). The tritherapies used as a basic effective treatment of AIDS associate two NRTIs and one NNRTI. Use of protease inhibitors in tritherapy regimens permit more ambitious therapeutic strategies (By similarity).</text>
</comment>
<comment type="subunit">
    <molecule>Matrix protein p17</molecule>
    <text evidence="4 6">Homotrimer; further assembles as hexamers of trimers (By similarity). Interacts with gp41 (via C-terminus) (By similarity). Interacts with host CALM1; this interaction induces a conformational change in the Matrix protein, triggering exposure of the myristate group (By similarity). Interacts with host AP3D1; this interaction allows the polyprotein trafficking to multivesicular bodies during virus assembly (By similarity). Part of the pre-integration complex (PIC) which is composed of viral genome, matrix protein, Vpr and integrase (By similarity).</text>
</comment>
<comment type="subunit">
    <molecule>Capsid protein p24</molecule>
    <text evidence="4 6">Homodimer; the homodimer further multimerizes as homohexamers or homopentamers. Interacts with human PPIA/CYPA (By similarity); This interaction stabilizes the capsid. Interacts with human NUP153 (By similarity). Interacts with host PDZD8; this interaction stabilizes the capsid (By similarity). Interacts with monkey TRIM5; this interaction destabilizes the capsid (By similarity).</text>
</comment>
<comment type="subunit">
    <molecule>Protease</molecule>
    <text evidence="4 6">Homodimer, whose active site consists of two apposed aspartic acid residues.</text>
</comment>
<comment type="subunit">
    <molecule>Reverse transcriptase/ribonuclease H</molecule>
    <text evidence="3">Heterodimer of p66 RT and p51 RT (RT p66/p51) (By similarity). Heterodimerization of RT is essential for DNA polymerase activity (By similarity). The overall folding of the subdomains is similar in p66 RT and p51 RT but the spatial arrangements of the subdomains are dramatically different (By similarity).</text>
</comment>
<comment type="subunit">
    <molecule>Integrase</molecule>
    <text evidence="4 6 17">Homotetramer; may further associate as a homohexadecamer (PubMed:28059769). Part of the pre-integration complex (PIC) which is composed of viral genome, matrix protein, Vpr and integrase. Interacts with human SMARCB1/INI1 and human PSIP1/LEDGF isoform 1. Interacts with human KPNA3; this interaction might play a role in nuclear import of the pre-integration complex (By similarity). Interacts with human NUP153; this interaction might play a role in nuclear import of the pre-integration complex (By similarity).</text>
</comment>
<comment type="subcellular location">
    <molecule>Gag-Pol polyprotein</molecule>
    <subcellularLocation>
        <location evidence="5">Host cell membrane</location>
        <topology>Lipid-anchor</topology>
    </subcellularLocation>
    <subcellularLocation>
        <location evidence="5">Host endosome</location>
        <location evidence="5">Host multivesicular body</location>
    </subcellularLocation>
    <text evidence="5">These locations are linked to virus assembly sites. The main location is the cell membrane, but under some circumstances, late endosomal compartments can serve as productive sites for virion assembly.</text>
</comment>
<comment type="subcellular location">
    <molecule>Matrix protein p17</molecule>
    <subcellularLocation>
        <location>Virion membrane</location>
        <topology evidence="18">Lipid-anchor</topology>
    </subcellularLocation>
    <subcellularLocation>
        <location evidence="1">Host nucleus</location>
    </subcellularLocation>
    <subcellularLocation>
        <location evidence="1">Host cytoplasm</location>
    </subcellularLocation>
</comment>
<comment type="subcellular location">
    <molecule>Capsid protein p24</molecule>
    <subcellularLocation>
        <location evidence="18">Virion</location>
    </subcellularLocation>
</comment>
<comment type="subcellular location">
    <molecule>Nucleocapsid protein p7</molecule>
    <subcellularLocation>
        <location evidence="18">Virion</location>
    </subcellularLocation>
</comment>
<comment type="subcellular location">
    <molecule>Reverse transcriptase/ribonuclease H</molecule>
    <subcellularLocation>
        <location evidence="18">Virion</location>
    </subcellularLocation>
</comment>
<comment type="subcellular location">
    <molecule>Integrase</molecule>
    <subcellularLocation>
        <location evidence="18">Virion</location>
    </subcellularLocation>
    <subcellularLocation>
        <location evidence="18">Host nucleus</location>
    </subcellularLocation>
    <subcellularLocation>
        <location evidence="18">Host cytoplasm</location>
    </subcellularLocation>
    <text evidence="18">Nuclear at initial phase, cytoplasmic at assembly.</text>
</comment>
<comment type="alternative products">
    <event type="ribosomal frameshifting"/>
    <isoform>
        <id>P03367-1</id>
        <name>Gag-Pol polyprotein</name>
        <sequence type="displayed"/>
    </isoform>
    <isoform>
        <id>P03348-1</id>
        <name>Gag polyprotein</name>
        <sequence type="external"/>
    </isoform>
    <text>Translation results in the formation of the Gag polyprotein most of the time. Ribosomal frameshifting at the gag-pol genes boundary occurs at low frequency and produces the Gag-Pol polyprotein. This strategy of translation probably allows the virus to modulate the quantity of each viral protein. Maintenance of a correct Gag to Gag-Pol ratio is essential for RNA dimerization and viral infectivity.</text>
</comment>
<comment type="domain">
    <molecule>Reverse transcriptase/ribonuclease H</molecule>
    <text evidence="1">RT is structured in five subdomains: finger, palm, thumb, connection and RNase H. Within the palm subdomain, the 'primer grip' region is thought to be involved in the positioning of the primer terminus for accommodating the incoming nucleotide. The RNase H domain stabilizes the association of RT with primer-template.</text>
</comment>
<comment type="domain">
    <molecule>Reverse transcriptase/ribonuclease H</molecule>
    <text evidence="1">The tryptophan repeat motif is involved in RT p66/p51 dimerization (By similarity).</text>
</comment>
<comment type="domain">
    <molecule>Integrase</molecule>
    <text evidence="1">The core domain contains the D-x(n)-D-x(35)-E motif, named for the phylogenetically conserved glutamic acid and aspartic acid residues and the invariant 35 amino acid spacing between the second and third acidic residues. Each acidic residue of the D,D(35)E motif is independently essential for the 3'-processing and strand transfer activities of purified integrase protein.</text>
</comment>
<comment type="PTM">
    <molecule>Gag-Pol polyprotein</molecule>
    <text evidence="4 10">Specific enzymatic cleavages by the viral protease yield mature proteins. The protease is released by autocatalytic cleavage. The polyprotein is cleaved during and after budding, this process is termed maturation. Proteolytic cleavage of p66 RT removes the RNase H domain to yield the p51 RT subunit. Nucleocapsid protein p7 might be further cleaved after virus entry.</text>
</comment>
<comment type="PTM">
    <molecule>Matrix protein p17</molecule>
    <text evidence="4">Tyrosine phosphorylated presumably in the virion by a host kinase. Phosphorylation is apparently not a major regulator of membrane association.</text>
</comment>
<comment type="PTM">
    <molecule>Capsid protein p24</molecule>
    <text evidence="5">Phosphorylated possibly by host MAPK1; this phosphorylation is necessary for Pin1-mediated virion uncoating.</text>
</comment>
<comment type="PTM">
    <molecule>Nucleocapsid protein p7</molecule>
    <text evidence="2">Methylated by host PRMT6, impairing its function by reducing RNA annealing and the initiation of reverse transcription.</text>
</comment>
<comment type="miscellaneous">
    <molecule>Reverse transcriptase/ribonuclease H</molecule>
    <text evidence="1">Error-prone enzyme that lacks a proof-reading function. High mutations rate is a direct consequence of this characteristic. RT also displays frequent template switching leading to high recombination rate. Recombination mostly occurs between homologous regions of the two copackaged RNA genomes. If these two RNA molecules derive from different viral strains, reverse transcription will give rise to highly recombinated proviral DNAs.</text>
</comment>
<comment type="miscellaneous">
    <text>HIV-1 lineages are divided in three main groups, M (for Major), O (for Outlier), and N (for New, or Non-M, Non-O). The vast majority of strains found worldwide belong to the group M. Group O seems to be endemic to and largely confined to Cameroon and neighboring countries in West Central Africa, where these viruses represent a small minority of HIV-1 strains. The group N is represented by a limited number of isolates from Cameroonian persons. The group M is further subdivided in 9 clades or subtypes (A to D, F to H, J and K).</text>
</comment>
<comment type="miscellaneous">
    <text>Resistance to inhibitors associated with mutations are observed both in viral protease and in reverse transcriptase. Most of the time, single mutations confer only a modest reduction in drug susceptibility. Combination of several mutations is usually required to develop a high-level drug resistance. These mutations are predominantly found in clade B viruses and not in other genotypes. They are listed in the clade B representative isolate HXB2 (AC P04585).</text>
</comment>
<comment type="miscellaneous">
    <molecule>Isoform Gag-Pol polyprotein</molecule>
    <text>Produced by -1 ribosomal frameshifting.</text>
</comment>
<comment type="online information" name="HIV drug resistance mutations">
    <link uri="https://www.iasusa.org/hiv-drug-resistance/hiv-drug-resistance-mutations/"/>
</comment>
<comment type="online information" name="hivdb">
    <link uri="https://hivdb.stanford.edu"/>
    <text>HIV drug resistance database</text>
</comment>